<evidence type="ECO:0000250" key="1">
    <source>
        <dbReference type="UniProtKB" id="O88700"/>
    </source>
</evidence>
<evidence type="ECO:0000255" key="2"/>
<evidence type="ECO:0000255" key="3">
    <source>
        <dbReference type="PROSITE-ProRule" id="PRU00328"/>
    </source>
</evidence>
<evidence type="ECO:0000255" key="4">
    <source>
        <dbReference type="PROSITE-ProRule" id="PRU00541"/>
    </source>
</evidence>
<evidence type="ECO:0000255" key="5">
    <source>
        <dbReference type="PROSITE-ProRule" id="PRU00542"/>
    </source>
</evidence>
<evidence type="ECO:0000256" key="6">
    <source>
        <dbReference type="SAM" id="MobiDB-lite"/>
    </source>
</evidence>
<evidence type="ECO:0000269" key="7">
    <source>
    </source>
</evidence>
<evidence type="ECO:0000269" key="8">
    <source>
    </source>
</evidence>
<evidence type="ECO:0000269" key="9">
    <source>
    </source>
</evidence>
<evidence type="ECO:0000269" key="10">
    <source>
    </source>
</evidence>
<evidence type="ECO:0000269" key="11">
    <source>
    </source>
</evidence>
<evidence type="ECO:0000269" key="12">
    <source>
    </source>
</evidence>
<evidence type="ECO:0000269" key="13">
    <source>
    </source>
</evidence>
<evidence type="ECO:0000269" key="14">
    <source>
    </source>
</evidence>
<evidence type="ECO:0000269" key="15">
    <source>
    </source>
</evidence>
<evidence type="ECO:0000269" key="16">
    <source>
    </source>
</evidence>
<evidence type="ECO:0000269" key="17">
    <source>
    </source>
</evidence>
<evidence type="ECO:0000269" key="18">
    <source>
    </source>
</evidence>
<evidence type="ECO:0000269" key="19">
    <source>
    </source>
</evidence>
<evidence type="ECO:0000269" key="20">
    <source>
    </source>
</evidence>
<evidence type="ECO:0000269" key="21">
    <source>
    </source>
</evidence>
<evidence type="ECO:0000269" key="22">
    <source>
    </source>
</evidence>
<evidence type="ECO:0000269" key="23">
    <source>
    </source>
</evidence>
<evidence type="ECO:0000269" key="24">
    <source>
    </source>
</evidence>
<evidence type="ECO:0000269" key="25">
    <source>
    </source>
</evidence>
<evidence type="ECO:0000269" key="26">
    <source>
    </source>
</evidence>
<evidence type="ECO:0000269" key="27">
    <source>
    </source>
</evidence>
<evidence type="ECO:0000269" key="28">
    <source>
    </source>
</evidence>
<evidence type="ECO:0000269" key="29">
    <source>
    </source>
</evidence>
<evidence type="ECO:0000269" key="30">
    <source ref="3"/>
</evidence>
<evidence type="ECO:0000305" key="31"/>
<evidence type="ECO:0000305" key="32">
    <source>
    </source>
</evidence>
<evidence type="ECO:0000305" key="33">
    <source>
    </source>
</evidence>
<evidence type="ECO:0007744" key="34">
    <source>
        <dbReference type="PDB" id="4CDG"/>
    </source>
</evidence>
<evidence type="ECO:0007744" key="35">
    <source>
        <dbReference type="PDB" id="4CGZ"/>
    </source>
</evidence>
<evidence type="ECO:0007744" key="36">
    <source>
        <dbReference type="PDB" id="4O3M"/>
    </source>
</evidence>
<evidence type="ECO:0007744" key="37">
    <source>
    </source>
</evidence>
<evidence type="ECO:0007744" key="38">
    <source>
    </source>
</evidence>
<evidence type="ECO:0007744" key="39">
    <source>
    </source>
</evidence>
<evidence type="ECO:0007744" key="40">
    <source>
    </source>
</evidence>
<evidence type="ECO:0007744" key="41">
    <source>
    </source>
</evidence>
<evidence type="ECO:0007744" key="42">
    <source>
    </source>
</evidence>
<evidence type="ECO:0007744" key="43">
    <source>
    </source>
</evidence>
<evidence type="ECO:0007744" key="44">
    <source>
    </source>
</evidence>
<evidence type="ECO:0007744" key="45">
    <source>
    </source>
</evidence>
<evidence type="ECO:0007829" key="46">
    <source>
        <dbReference type="PDB" id="2KV2"/>
    </source>
</evidence>
<evidence type="ECO:0007829" key="47">
    <source>
        <dbReference type="PDB" id="2RRD"/>
    </source>
</evidence>
<evidence type="ECO:0007829" key="48">
    <source>
        <dbReference type="PDB" id="3WE2"/>
    </source>
</evidence>
<evidence type="ECO:0007829" key="49">
    <source>
        <dbReference type="PDB" id="4CDG"/>
    </source>
</evidence>
<evidence type="ECO:0007829" key="50">
    <source>
        <dbReference type="PDB" id="4CGZ"/>
    </source>
</evidence>
<evidence type="ECO:0007829" key="51">
    <source>
        <dbReference type="PDB" id="4O3M"/>
    </source>
</evidence>
<evidence type="ECO:0007829" key="52">
    <source>
        <dbReference type="PDB" id="5LUP"/>
    </source>
</evidence>
<evidence type="ECO:0007829" key="53">
    <source>
        <dbReference type="PDB" id="7AUC"/>
    </source>
</evidence>
<evidence type="ECO:0007829" key="54">
    <source>
        <dbReference type="PDB" id="7AUD"/>
    </source>
</evidence>
<evidence type="ECO:0007829" key="55">
    <source>
        <dbReference type="PDB" id="7XUW"/>
    </source>
</evidence>
<evidence type="ECO:0007829" key="56">
    <source>
        <dbReference type="PDB" id="7XV0"/>
    </source>
</evidence>
<accession>P54132</accession>
<accession>Q52M96</accession>
<gene>
    <name type="primary">BLM</name>
    <name type="synonym">RECQ2</name>
    <name type="synonym">RECQL3</name>
</gene>
<feature type="chain" id="PRO_0000205039" description="RecQ-like DNA helicase BLM">
    <location>
        <begin position="1"/>
        <end position="1417"/>
    </location>
</feature>
<feature type="domain" description="Helicase ATP-binding" evidence="4 33">
    <location>
        <begin position="676"/>
        <end position="851"/>
    </location>
</feature>
<feature type="domain" description="Helicase C-terminal" evidence="5 33">
    <location>
        <begin position="877"/>
        <end position="1024"/>
    </location>
</feature>
<feature type="domain" description="HRDC" evidence="3 17 32">
    <location>
        <begin position="1212"/>
        <end position="1292"/>
    </location>
</feature>
<feature type="region of interest" description="Disordered" evidence="6">
    <location>
        <begin position="1"/>
        <end position="21"/>
    </location>
</feature>
<feature type="region of interest" description="Disordered" evidence="6">
    <location>
        <begin position="203"/>
        <end position="227"/>
    </location>
</feature>
<feature type="region of interest" description="Disordered" evidence="6">
    <location>
        <begin position="250"/>
        <end position="291"/>
    </location>
</feature>
<feature type="region of interest" description="Necessary for interaction with SPIDR" evidence="19">
    <location>
        <begin position="301"/>
        <end position="600"/>
    </location>
</feature>
<feature type="region of interest" description="Necessary for dimerization and homooligomerization" evidence="23">
    <location>
        <begin position="362"/>
        <end position="414"/>
    </location>
</feature>
<feature type="region of interest" description="3' overhang DNA-binding" evidence="22">
    <location>
        <begin position="870"/>
        <end position="873"/>
    </location>
</feature>
<feature type="region of interest" description="3' overhang DNA-binding" evidence="21 22 35 36">
    <location>
        <begin position="897"/>
        <end position="899"/>
    </location>
</feature>
<feature type="region of interest" description="3' overhang DNA-binding" evidence="21 22 35 36">
    <location>
        <begin position="1000"/>
        <end position="1003"/>
    </location>
</feature>
<feature type="region of interest" description="DNA Holliday junction binding" evidence="20">
    <location>
        <begin position="1094"/>
        <end position="1139"/>
    </location>
</feature>
<feature type="region of interest" description="3' overhang DNA-binding" evidence="21 22 35 36">
    <location>
        <begin position="1110"/>
        <end position="1112"/>
    </location>
</feature>
<feature type="region of interest" description="3' overhang DNA-binding" evidence="21 22 35 36">
    <location>
        <begin position="1121"/>
        <end position="1125"/>
    </location>
</feature>
<feature type="region of interest" description="3' overhang DNA-binding" evidence="21 22 35 36">
    <location>
        <begin position="1160"/>
        <end position="1166"/>
    </location>
</feature>
<feature type="region of interest" description="Necessary for ssDNA and DNA Holliday junction binding" evidence="17">
    <location>
        <begin position="1227"/>
        <end position="1244"/>
    </location>
</feature>
<feature type="region of interest" description="Disordered" evidence="6">
    <location>
        <begin position="1289"/>
        <end position="1417"/>
    </location>
</feature>
<feature type="short sequence motif" description="DEAH box">
    <location>
        <begin position="795"/>
        <end position="798"/>
    </location>
</feature>
<feature type="short sequence motif" description="Nuclear localization signal" evidence="2">
    <location>
        <begin position="1334"/>
        <end position="1349"/>
    </location>
</feature>
<feature type="compositionally biased region" description="Polar residues" evidence="6">
    <location>
        <begin position="1"/>
        <end position="11"/>
    </location>
</feature>
<feature type="compositionally biased region" description="Acidic residues" evidence="6">
    <location>
        <begin position="216"/>
        <end position="226"/>
    </location>
</feature>
<feature type="compositionally biased region" description="Basic and acidic residues" evidence="6">
    <location>
        <begin position="256"/>
        <end position="284"/>
    </location>
</feature>
<feature type="compositionally biased region" description="Low complexity" evidence="6">
    <location>
        <begin position="1295"/>
        <end position="1310"/>
    </location>
</feature>
<feature type="compositionally biased region" description="Basic residues" evidence="6">
    <location>
        <begin position="1332"/>
        <end position="1350"/>
    </location>
</feature>
<feature type="compositionally biased region" description="Low complexity" evidence="6">
    <location>
        <begin position="1351"/>
        <end position="1363"/>
    </location>
</feature>
<feature type="compositionally biased region" description="Low complexity" evidence="6">
    <location>
        <begin position="1370"/>
        <end position="1392"/>
    </location>
</feature>
<feature type="binding site" evidence="21 22 34 35 36">
    <location>
        <begin position="668"/>
        <end position="672"/>
    </location>
    <ligand>
        <name>ATP</name>
        <dbReference type="ChEBI" id="CHEBI:30616"/>
    </ligand>
</feature>
<feature type="binding site" evidence="21 22 34 35 36">
    <location>
        <begin position="692"/>
        <end position="696"/>
    </location>
    <ligand>
        <name>ATP</name>
        <dbReference type="ChEBI" id="CHEBI:30616"/>
    </ligand>
</feature>
<feature type="binding site" evidence="22 34 35">
    <location>
        <position position="982"/>
    </location>
    <ligand>
        <name>ATP</name>
        <dbReference type="ChEBI" id="CHEBI:30616"/>
    </ligand>
</feature>
<feature type="binding site" evidence="21 22 34 35 36">
    <location>
        <position position="1036"/>
    </location>
    <ligand>
        <name>Zn(2+)</name>
        <dbReference type="ChEBI" id="CHEBI:29105"/>
    </ligand>
</feature>
<feature type="binding site" evidence="21 22 34 35 36">
    <location>
        <position position="1055"/>
    </location>
    <ligand>
        <name>Zn(2+)</name>
        <dbReference type="ChEBI" id="CHEBI:29105"/>
    </ligand>
</feature>
<feature type="binding site" evidence="21 22 34 35 36">
    <location>
        <position position="1063"/>
    </location>
    <ligand>
        <name>Zn(2+)</name>
        <dbReference type="ChEBI" id="CHEBI:29105"/>
    </ligand>
</feature>
<feature type="binding site" evidence="21 22 34 35 36">
    <location>
        <position position="1066"/>
    </location>
    <ligand>
        <name>Zn(2+)</name>
        <dbReference type="ChEBI" id="CHEBI:29105"/>
    </ligand>
</feature>
<feature type="binding site" evidence="22 34 35">
    <location>
        <position position="1242"/>
    </location>
    <ligand>
        <name>ATP</name>
        <dbReference type="ChEBI" id="CHEBI:30616"/>
    </ligand>
</feature>
<feature type="site" description="3' overhang DNA-binding" evidence="22">
    <location>
        <position position="717"/>
    </location>
</feature>
<feature type="site" description="3' overhang DNA-binding" evidence="22">
    <location>
        <position position="808"/>
    </location>
</feature>
<feature type="site" description="3' overhang DNA-binding; via amide nitrogen" evidence="21 22 35 36">
    <location>
        <position position="920"/>
    </location>
</feature>
<feature type="site" description="3' overhang DNA-binding" evidence="21 22 35 36">
    <location>
        <position position="946"/>
    </location>
</feature>
<feature type="site" description="3' overhang DNA-binding" evidence="21 22 35 36">
    <location>
        <position position="968"/>
    </location>
</feature>
<feature type="site" description="3' overhang DNA-binding" evidence="21 22 35 36">
    <location>
        <position position="1110"/>
    </location>
</feature>
<feature type="modified residue" description="Phosphoserine" evidence="41">
    <location>
        <position position="28"/>
    </location>
</feature>
<feature type="modified residue" description="Phosphoserine" evidence="38">
    <location>
        <position position="48"/>
    </location>
</feature>
<feature type="modified residue" description="Phosphothreonine" evidence="38">
    <location>
        <position position="57"/>
    </location>
</feature>
<feature type="modified residue" description="Phosphothreonine" evidence="38">
    <location>
        <position position="114"/>
    </location>
</feature>
<feature type="modified residue" description="Phosphoserine" evidence="41 42">
    <location>
        <position position="168"/>
    </location>
</feature>
<feature type="modified residue" description="Phosphothreonine" evidence="41 42">
    <location>
        <position position="171"/>
    </location>
</feature>
<feature type="modified residue" description="Phosphoserine" evidence="42">
    <location>
        <position position="328"/>
    </location>
</feature>
<feature type="modified residue" description="Phosphoserine" evidence="42">
    <location>
        <position position="338"/>
    </location>
</feature>
<feature type="modified residue" description="Phosphoserine" evidence="38 42">
    <location>
        <position position="358"/>
    </location>
</feature>
<feature type="modified residue" description="Phosphoserine" evidence="38 41">
    <location>
        <position position="419"/>
    </location>
</feature>
<feature type="modified residue" description="Phosphoserine" evidence="38 41 42">
    <location>
        <position position="422"/>
    </location>
</feature>
<feature type="modified residue" description="Phosphoserine" evidence="41">
    <location>
        <position position="426"/>
    </location>
</feature>
<feature type="modified residue" description="Phosphoserine" evidence="42">
    <location>
        <position position="464"/>
    </location>
</feature>
<feature type="modified residue" description="Phosphoserine" evidence="37 40 42">
    <location>
        <position position="499"/>
    </location>
</feature>
<feature type="modified residue" description="Phosphothreonine" evidence="37">
    <location>
        <position position="508"/>
    </location>
</feature>
<feature type="modified residue" description="N6-acetyllysine" evidence="39">
    <location>
        <position position="863"/>
    </location>
</feature>
<feature type="modified residue" description="Phosphoserine" evidence="42">
    <location>
        <position position="1197"/>
    </location>
</feature>
<feature type="modified residue" description="Phosphoserine" evidence="38">
    <location>
        <position position="1295"/>
    </location>
</feature>
<feature type="modified residue" description="Phosphoserine" evidence="38">
    <location>
        <position position="1296"/>
    </location>
</feature>
<feature type="modified residue" description="Phosphoserine" evidence="38 42">
    <location>
        <position position="1310"/>
    </location>
</feature>
<feature type="cross-link" description="Glycyl lysine isopeptide (Lys-Gly) (interchain with G-Cter in SUMO2)" evidence="45">
    <location>
        <position position="24"/>
    </location>
</feature>
<feature type="cross-link" description="Glycyl lysine isopeptide (Lys-Gly) (interchain with G-Cter in SUMO2)" evidence="45">
    <location>
        <position position="31"/>
    </location>
</feature>
<feature type="cross-link" description="Glycyl lysine isopeptide (Lys-Gly) (interchain with G-Cter in SUMO2)" evidence="45">
    <location>
        <position position="38"/>
    </location>
</feature>
<feature type="cross-link" description="Glycyl lysine isopeptide (Lys-Gly) (interchain with G-Cter in SUMO2)" evidence="45">
    <location>
        <position position="56"/>
    </location>
</feature>
<feature type="cross-link" description="Glycyl lysine isopeptide (Lys-Gly) (interchain with G-Cter in SUMO2)" evidence="45">
    <location>
        <position position="63"/>
    </location>
</feature>
<feature type="cross-link" description="Glycyl lysine isopeptide (Lys-Gly) (interchain with G-Cter in SUMO2)" evidence="45">
    <location>
        <position position="87"/>
    </location>
</feature>
<feature type="cross-link" description="Glycyl lysine isopeptide (Lys-Gly) (interchain with G-Cter in SUMO2)" evidence="45">
    <location>
        <position position="91"/>
    </location>
</feature>
<feature type="cross-link" description="Glycyl lysine isopeptide (Lys-Gly) (interchain with G-Cter in SUMO2)" evidence="45">
    <location>
        <position position="105"/>
    </location>
</feature>
<feature type="cross-link" description="Glycyl lysine isopeptide (Lys-Gly) (interchain with G-Cter in SUMO2)" evidence="45">
    <location>
        <position position="116"/>
    </location>
</feature>
<feature type="cross-link" description="Glycyl lysine isopeptide (Lys-Gly) (interchain with G-Cter in SUMO2)" evidence="45">
    <location>
        <position position="129"/>
    </location>
</feature>
<feature type="cross-link" description="Glycyl lysine isopeptide (Lys-Gly) (interchain with G-Cter in SUMO2)" evidence="45">
    <location>
        <position position="195"/>
    </location>
</feature>
<feature type="cross-link" description="Glycyl lysine isopeptide (Lys-Gly) (interchain with G-Cter in SUMO2)" evidence="45">
    <location>
        <position position="205"/>
    </location>
</feature>
<feature type="cross-link" description="Glycyl lysine isopeptide (Lys-Gly) (interchain with G-Cter in SUMO2)" evidence="43 45">
    <location>
        <position position="331"/>
    </location>
</feature>
<feature type="cross-link" description="Glycyl lysine isopeptide (Lys-Gly) (interchain with G-Cter in SUMO2)" evidence="45">
    <location>
        <position position="344"/>
    </location>
</feature>
<feature type="cross-link" description="Glycyl lysine isopeptide (Lys-Gly) (interchain with G-Cter in SUMO2)" evidence="45">
    <location>
        <position position="347"/>
    </location>
</feature>
<feature type="cross-link" description="Glycyl lysine isopeptide (Lys-Gly) (interchain with G-Cter in SUMO2)" evidence="45">
    <location>
        <position position="451"/>
    </location>
</feature>
<feature type="cross-link" description="Glycyl lysine isopeptide (Lys-Gly) (interchain with G-Cter in SUMO2)" evidence="45">
    <location>
        <position position="476"/>
    </location>
</feature>
<feature type="cross-link" description="Glycyl lysine isopeptide (Lys-Gly) (interchain with G-Cter in SUMO2)" evidence="44 45">
    <location>
        <position position="484"/>
    </location>
</feature>
<feature type="cross-link" description="Glycyl lysine isopeptide (Lys-Gly) (interchain with G-Cter in SUMO2)" evidence="45">
    <location>
        <position position="498"/>
    </location>
</feature>
<feature type="cross-link" description="Glycyl lysine isopeptide (Lys-Gly) (interchain with G-Cter in SUMO2)" evidence="45">
    <location>
        <position position="513"/>
    </location>
</feature>
<feature type="cross-link" description="Glycyl lysine isopeptide (Lys-Gly) (interchain with G-Cter in SUMO2)" evidence="45">
    <location>
        <position position="514"/>
    </location>
</feature>
<feature type="cross-link" description="Glycyl lysine isopeptide (Lys-Gly) (interchain with G-Cter in SUMO2)" evidence="45">
    <location>
        <position position="531"/>
    </location>
</feature>
<feature type="cross-link" description="Glycyl lysine isopeptide (Lys-Gly) (interchain with G-Cter in SUMO2)" evidence="45">
    <location>
        <position position="535"/>
    </location>
</feature>
<feature type="cross-link" description="Glycyl lysine isopeptide (Lys-Gly) (interchain with G-Cter in SUMO2)" evidence="45">
    <location>
        <position position="588"/>
    </location>
</feature>
<feature type="cross-link" description="Glycyl lysine isopeptide (Lys-Gly) (interchain with G-Cter in SUMO2)" evidence="43 45">
    <location>
        <position position="594"/>
    </location>
</feature>
<feature type="cross-link" description="Glycyl lysine isopeptide (Lys-Gly) (interchain with G-Cter in SUMO2)" evidence="45">
    <location>
        <position position="604"/>
    </location>
</feature>
<feature type="cross-link" description="Glycyl lysine isopeptide (Lys-Gly) (interchain with G-Cter in SUMO2)" evidence="45">
    <location>
        <position position="1125"/>
    </location>
</feature>
<feature type="cross-link" description="Glycyl lysine isopeptide (Lys-Gly) (interchain with G-Cter in SUMO2)" evidence="45">
    <location>
        <position position="1199"/>
    </location>
</feature>
<feature type="cross-link" description="Glycyl lysine isopeptide (Lys-Gly) (interchain with G-Cter in SUMO2)" evidence="45">
    <location>
        <position position="1207"/>
    </location>
</feature>
<feature type="cross-link" description="Glycyl lysine isopeptide (Lys-Gly) (interchain with G-Cter in SUMO2)" evidence="45">
    <location>
        <position position="1329"/>
    </location>
</feature>
<feature type="cross-link" description="Glycyl lysine isopeptide (Lys-Gly) (interchain with G-Cter in SUMO2)" evidence="45">
    <location>
        <position position="1372"/>
    </location>
</feature>
<feature type="cross-link" description="Glycyl lysine isopeptide (Lys-Gly) (interchain with G-Cter in SUMO2)" evidence="45">
    <location>
        <position position="1395"/>
    </location>
</feature>
<feature type="sequence variant" id="VAR_022295" description="In dbSNP:rs28384988." evidence="30">
    <original>K</original>
    <variation>R</variation>
    <location>
        <position position="137"/>
    </location>
</feature>
<feature type="sequence variant" id="VAR_022296" description="In dbSNP:rs28384991." evidence="30">
    <original>T</original>
    <variation>M</variation>
    <location>
        <position position="298"/>
    </location>
</feature>
<feature type="sequence variant" id="VAR_022297" description="In dbSNP:rs28385012." evidence="30">
    <original>R</original>
    <variation>Q</variation>
    <location>
        <position position="591"/>
    </location>
</feature>
<feature type="sequence variant" id="VAR_006901" description="In BLM; dbSNP:rs747281324." evidence="26">
    <original>Q</original>
    <variation>R</variation>
    <location>
        <position position="672"/>
    </location>
</feature>
<feature type="sequence variant" id="VAR_016032" description="In BLM; dbSNP:rs767086502.">
    <original>I</original>
    <variation>T</variation>
    <location>
        <position position="841"/>
    </location>
</feature>
<feature type="sequence variant" id="VAR_006902" description="In BLM; dbSNP:rs137853152." evidence="26">
    <original>T</original>
    <variation>I</variation>
    <location>
        <position position="843"/>
    </location>
</feature>
<feature type="sequence variant" id="VAR_022298" description="In dbSNP:rs2227935." evidence="30">
    <original>P</original>
    <variation>L</variation>
    <location>
        <position position="868"/>
    </location>
</feature>
<feature type="sequence variant" id="VAR_016033" description="In BLM." evidence="7">
    <original>C</original>
    <variation>R</variation>
    <location>
        <position position="878"/>
    </location>
</feature>
<feature type="sequence variant" id="VAR_009138" description="In BLM; dbSNP:rs763471784." evidence="12">
    <original>G</original>
    <variation>E</variation>
    <location>
        <position position="891"/>
    </location>
</feature>
<feature type="sequence variant" id="VAR_009139" description="In BLM; dbSNP:rs758311406." evidence="12">
    <original>C</original>
    <variation>Y</variation>
    <location>
        <position position="901"/>
    </location>
</feature>
<feature type="sequence variant" id="VAR_009140" description="In BLM; dbSNP:rs137853153." evidence="27">
    <original>C</original>
    <variation>F</variation>
    <location>
        <position position="1036"/>
    </location>
</feature>
<feature type="sequence variant" id="VAR_051731" description="In dbSNP:rs2229035.">
    <original>A</original>
    <variation>D</variation>
    <location>
        <position position="1043"/>
    </location>
</feature>
<feature type="sequence variant" id="VAR_006903" description="In BLM; dbSNP:rs367543029." evidence="26">
    <original>C</original>
    <variation>S</variation>
    <location>
        <position position="1055"/>
    </location>
</feature>
<feature type="sequence variant" id="VAR_022299" description="In dbSNP:rs28385141." evidence="30">
    <original>V</original>
    <variation>I</variation>
    <location>
        <position position="1205"/>
    </location>
</feature>
<feature type="sequence variant" id="VAR_014912" description="In dbSNP:rs1801256.">
    <original>S</original>
    <variation>T</variation>
    <location>
        <position position="1209"/>
    </location>
</feature>
<feature type="sequence variant" id="VAR_022300" description="In dbSNP:rs28385142." evidence="30">
    <original>E</original>
    <variation>K</variation>
    <location>
        <position position="1213"/>
    </location>
</feature>
<feature type="sequence variant" id="VAR_022301" description="In dbSNP:rs7167216." evidence="30">
    <original>V</original>
    <variation>I</variation>
    <location>
        <position position="1321"/>
    </location>
</feature>
<feature type="mutagenesis site" description="Reduced intramolecular association between both the helicase ATP-binding domain and the helicase C-terminal domain with the HRDC domain. No change in forked duplex DNA helicase activity. No change in DNA 4-way junction branch migration and Holliday junction dissolution activities. No change in suppression of enhanced sister chromatide exchange activity." evidence="22">
    <original>H</original>
    <variation>A</variation>
    <location>
        <position position="666"/>
    </location>
</feature>
<feature type="mutagenesis site" description="Reduced intramolecular interaction between both the helicase ATP-binding domain and the helicase C-terminal domain with the HRDC domain. No change in forked duplex DNA helicase activity. No change in DNA 4-way junction branch migration and Holliday junction dissolution activities. No change in suppression of enhanced sister chromatide exchange activity." evidence="22">
    <original>S</original>
    <variation>A</variation>
    <location>
        <position position="729"/>
    </location>
</feature>
<feature type="mutagenesis site" description="Decreased DNA Holliday junction binding." evidence="20">
    <location>
        <begin position="1094"/>
        <end position="1103"/>
    </location>
</feature>
<feature type="mutagenesis site" description="Decreased slightly DNA Holliday junction binding." evidence="20">
    <original>S</original>
    <variation>A</variation>
    <location>
        <position position="1121"/>
    </location>
</feature>
<feature type="mutagenesis site" description="Decreased DNA Holliday junction binding." evidence="20">
    <original>K</original>
    <variation>A</variation>
    <location>
        <position position="1125"/>
    </location>
</feature>
<feature type="mutagenesis site" description="Decreased strongly DNA Holliday junction binding." evidence="20">
    <original>R</original>
    <variation>A</variation>
    <location>
        <position position="1139"/>
    </location>
</feature>
<feature type="mutagenesis site" description="Reduced strongly DNA helicase activity." evidence="21">
    <original>N</original>
    <variation>A</variation>
    <location>
        <position position="1164"/>
    </location>
</feature>
<feature type="mutagenesis site" description="Reduced ssDNA binding. No change in DNA Holliday junction binding." evidence="17">
    <original>K</original>
    <variation>E</variation>
    <location>
        <position position="1227"/>
    </location>
</feature>
<feature type="mutagenesis site" description="No change in ssDNA binding. Increased DNA Holliday junction binding." evidence="17">
    <original>Y</original>
    <variation>A</variation>
    <location>
        <position position="1237"/>
    </location>
</feature>
<feature type="mutagenesis site" description="Reduced ssDNA binding. No change in DNA Holliday junction binding." evidence="17">
    <original>N</original>
    <variation>D</variation>
    <location>
        <position position="1239"/>
    </location>
</feature>
<feature type="mutagenesis site" description="No change in ssDNA binding. Decreased DNA Holliday junction binding." evidence="17">
    <original>T</original>
    <variation>A</variation>
    <location>
        <position position="1243"/>
    </location>
</feature>
<feature type="mutagenesis site" description="Reduced ssDNA binding. Increased DNA Holliday junction binding." evidence="17">
    <original>V</original>
    <variation>A</variation>
    <location>
        <position position="1244"/>
    </location>
</feature>
<feature type="mutagenesis site" description="Reduced intramolecular interaction between both the helicase ATP-binding domain and the helicase C-terminal domain with the HRDC domain." evidence="22">
    <original>K</original>
    <variation>V</variation>
    <location>
        <position position="1270"/>
    </location>
</feature>
<feature type="helix" evidence="56">
    <location>
        <begin position="151"/>
        <end position="154"/>
    </location>
</feature>
<feature type="helix" evidence="52">
    <location>
        <begin position="365"/>
        <end position="383"/>
    </location>
</feature>
<feature type="helix" evidence="52">
    <location>
        <begin position="388"/>
        <end position="391"/>
    </location>
</feature>
<feature type="helix" evidence="52">
    <location>
        <begin position="397"/>
        <end position="411"/>
    </location>
</feature>
<feature type="turn" evidence="55">
    <location>
        <begin position="559"/>
        <end position="562"/>
    </location>
</feature>
<feature type="helix" evidence="53">
    <location>
        <begin position="640"/>
        <end position="643"/>
    </location>
</feature>
<feature type="helix" evidence="53">
    <location>
        <begin position="652"/>
        <end position="661"/>
    </location>
</feature>
<feature type="helix" evidence="53">
    <location>
        <begin position="672"/>
        <end position="680"/>
    </location>
</feature>
<feature type="strand" evidence="53">
    <location>
        <begin position="685"/>
        <end position="688"/>
    </location>
</feature>
<feature type="helix" evidence="53">
    <location>
        <begin position="695"/>
        <end position="705"/>
    </location>
</feature>
<feature type="strand" evidence="53">
    <location>
        <begin position="706"/>
        <end position="713"/>
    </location>
</feature>
<feature type="helix" evidence="53">
    <location>
        <begin position="717"/>
        <end position="729"/>
    </location>
</feature>
<feature type="strand" evidence="53">
    <location>
        <begin position="734"/>
        <end position="737"/>
    </location>
</feature>
<feature type="helix" evidence="53">
    <location>
        <begin position="745"/>
        <end position="753"/>
    </location>
</feature>
<feature type="strand" evidence="53">
    <location>
        <begin position="755"/>
        <end position="757"/>
    </location>
</feature>
<feature type="strand" evidence="53">
    <location>
        <begin position="762"/>
        <end position="765"/>
    </location>
</feature>
<feature type="helix" evidence="53">
    <location>
        <begin position="767"/>
        <end position="770"/>
    </location>
</feature>
<feature type="helix" evidence="53">
    <location>
        <begin position="774"/>
        <end position="785"/>
    </location>
</feature>
<feature type="strand" evidence="53">
    <location>
        <begin position="789"/>
        <end position="796"/>
    </location>
</feature>
<feature type="helix" evidence="49">
    <location>
        <begin position="797"/>
        <end position="800"/>
    </location>
</feature>
<feature type="turn" evidence="54">
    <location>
        <begin position="804"/>
        <end position="807"/>
    </location>
</feature>
<feature type="helix" evidence="49">
    <location>
        <begin position="809"/>
        <end position="814"/>
    </location>
</feature>
<feature type="turn" evidence="53">
    <location>
        <begin position="818"/>
        <end position="820"/>
    </location>
</feature>
<feature type="strand" evidence="53">
    <location>
        <begin position="826"/>
        <end position="830"/>
    </location>
</feature>
<feature type="helix" evidence="53">
    <location>
        <begin position="835"/>
        <end position="845"/>
    </location>
</feature>
<feature type="helix" evidence="53">
    <location>
        <begin position="846"/>
        <end position="848"/>
    </location>
</feature>
<feature type="strand" evidence="53">
    <location>
        <begin position="851"/>
        <end position="853"/>
    </location>
</feature>
<feature type="strand" evidence="53">
    <location>
        <begin position="862"/>
        <end position="868"/>
    </location>
</feature>
<feature type="turn" evidence="53">
    <location>
        <begin position="871"/>
        <end position="873"/>
    </location>
</feature>
<feature type="helix" evidence="53">
    <location>
        <begin position="874"/>
        <end position="885"/>
    </location>
</feature>
<feature type="strand" evidence="53">
    <location>
        <begin position="891"/>
        <end position="894"/>
    </location>
</feature>
<feature type="helix" evidence="53">
    <location>
        <begin position="898"/>
        <end position="910"/>
    </location>
</feature>
<feature type="strand" evidence="53">
    <location>
        <begin position="915"/>
        <end position="919"/>
    </location>
</feature>
<feature type="helix" evidence="53">
    <location>
        <begin position="924"/>
        <end position="935"/>
    </location>
</feature>
<feature type="strand" evidence="53">
    <location>
        <begin position="941"/>
        <end position="945"/>
    </location>
</feature>
<feature type="helix" evidence="53">
    <location>
        <begin position="947"/>
        <end position="950"/>
    </location>
</feature>
<feature type="strand" evidence="53">
    <location>
        <begin position="960"/>
        <end position="965"/>
    </location>
</feature>
<feature type="helix" evidence="53">
    <location>
        <begin position="970"/>
        <end position="977"/>
    </location>
</feature>
<feature type="turn" evidence="53">
    <location>
        <begin position="978"/>
        <end position="983"/>
    </location>
</feature>
<feature type="strand" evidence="53">
    <location>
        <begin position="987"/>
        <end position="993"/>
    </location>
</feature>
<feature type="helix" evidence="53">
    <location>
        <begin position="995"/>
        <end position="1007"/>
    </location>
</feature>
<feature type="helix" evidence="53">
    <location>
        <begin position="1013"/>
        <end position="1031"/>
    </location>
</feature>
<feature type="helix" evidence="53">
    <location>
        <begin position="1037"/>
        <end position="1044"/>
    </location>
</feature>
<feature type="helix" evidence="53">
    <location>
        <begin position="1054"/>
        <end position="1057"/>
    </location>
</feature>
<feature type="helix" evidence="53">
    <location>
        <begin position="1059"/>
        <end position="1061"/>
    </location>
</feature>
<feature type="helix" evidence="53">
    <location>
        <begin position="1064"/>
        <end position="1067"/>
    </location>
</feature>
<feature type="turn" evidence="49">
    <location>
        <begin position="1069"/>
        <end position="1071"/>
    </location>
</feature>
<feature type="strand" evidence="49">
    <location>
        <begin position="1074"/>
        <end position="1076"/>
    </location>
</feature>
<feature type="helix" evidence="51">
    <location>
        <begin position="1078"/>
        <end position="1090"/>
    </location>
</feature>
<feature type="strand" evidence="48">
    <location>
        <begin position="1096"/>
        <end position="1099"/>
    </location>
</feature>
<feature type="helix" evidence="51">
    <location>
        <begin position="1111"/>
        <end position="1119"/>
    </location>
</feature>
<feature type="turn" evidence="51">
    <location>
        <begin position="1129"/>
        <end position="1136"/>
    </location>
</feature>
<feature type="helix" evidence="51">
    <location>
        <begin position="1139"/>
        <end position="1151"/>
    </location>
</feature>
<feature type="strand" evidence="51">
    <location>
        <begin position="1154"/>
        <end position="1161"/>
    </location>
</feature>
<feature type="strand" evidence="50">
    <location>
        <begin position="1163"/>
        <end position="1166"/>
    </location>
</feature>
<feature type="strand" evidence="51">
    <location>
        <begin position="1167"/>
        <end position="1173"/>
    </location>
</feature>
<feature type="helix" evidence="51">
    <location>
        <begin position="1177"/>
        <end position="1181"/>
    </location>
</feature>
<feature type="strand" evidence="49">
    <location>
        <begin position="1188"/>
        <end position="1190"/>
    </location>
</feature>
<feature type="helix" evidence="49">
    <location>
        <begin position="1195"/>
        <end position="1197"/>
    </location>
</feature>
<feature type="strand" evidence="47">
    <location>
        <begin position="1207"/>
        <end position="1209"/>
    </location>
</feature>
<feature type="helix" evidence="53">
    <location>
        <begin position="1210"/>
        <end position="1233"/>
    </location>
</feature>
<feature type="helix" evidence="53">
    <location>
        <begin position="1237"/>
        <end position="1239"/>
    </location>
</feature>
<feature type="helix" evidence="53">
    <location>
        <begin position="1243"/>
        <end position="1252"/>
    </location>
</feature>
<feature type="helix" evidence="53">
    <location>
        <begin position="1257"/>
        <end position="1260"/>
    </location>
</feature>
<feature type="strand" evidence="46">
    <location>
        <begin position="1263"/>
        <end position="1265"/>
    </location>
</feature>
<feature type="helix" evidence="53">
    <location>
        <begin position="1268"/>
        <end position="1283"/>
    </location>
</feature>
<feature type="helix" evidence="53">
    <location>
        <begin position="1284"/>
        <end position="1288"/>
    </location>
</feature>
<comment type="function">
    <text evidence="1 8 14 17 18 19 20 21 22 25 28 29">ATP-dependent DNA helicase that unwinds double-stranded (ds)DNA in a 3'-5' direction (PubMed:24816114, PubMed:25901030, PubMed:9388193, PubMed:9765292). Participates in DNA replication and repair (PubMed:12019152, PubMed:21325134, PubMed:23509288, PubMed:34606619). Involved in 5'-end resection of DNA during double-strand break (DSB) repair: unwinds DNA and recruits DNA2 which mediates the cleavage of 5'-ssDNA (PubMed:21325134). Stimulates DNA 4-way junction branch migration and DNA Holliday junction dissolution (PubMed:25901030). Binds single-stranded DNA (ssDNA), forked duplex DNA and Holliday junction DNA (PubMed:20639533, PubMed:24257077, PubMed:25901030). Unwinds G-quadruplex DNA; unwinding occurs in the 3'-5' direction and requires a 3' single-stranded end of at least 7 nucleotides (PubMed:18426915, PubMed:9765292). Helicase activity is higher on G-quadruplex substrates than on duplex DNA substrates (PubMed:9765292). Telomeres, immunoglobulin heavy chain switch regions and rDNA are notably G-rich; formation of G-quadruplex DNA would block DNA replication and transcription (PubMed:18426915, PubMed:9765292). Negatively regulates sister chromatid exchange (SCE) (PubMed:25901030). Recruited by the KHDC3L-OOEP scaffold to DNA replication forks where it is retained by TRIM25 ubiquitination, it thereby promotes the restart of stalled replication forks (By similarity).</text>
</comment>
<comment type="function">
    <text evidence="24">(Microbial infection) Eliminates nuclear HIV-1 cDNA, thereby suppressing immune sensing and proviral hyper-integration.</text>
</comment>
<comment type="catalytic activity">
    <reaction evidence="21 22 28 29">
        <text>Couples ATP hydrolysis with the unwinding of duplex DNA by translocating in the 3'-5' direction.</text>
        <dbReference type="EC" id="5.6.2.4"/>
    </reaction>
</comment>
<comment type="catalytic activity">
    <reaction evidence="21 22 28">
        <text>ATP + H2O = ADP + phosphate + H(+)</text>
        <dbReference type="Rhea" id="RHEA:13065"/>
        <dbReference type="ChEBI" id="CHEBI:15377"/>
        <dbReference type="ChEBI" id="CHEBI:15378"/>
        <dbReference type="ChEBI" id="CHEBI:30616"/>
        <dbReference type="ChEBI" id="CHEBI:43474"/>
        <dbReference type="ChEBI" id="CHEBI:456216"/>
        <dbReference type="EC" id="5.6.2.4"/>
    </reaction>
</comment>
<comment type="cofactor">
    <cofactor evidence="21 22">
        <name>Zn(2+)</name>
        <dbReference type="ChEBI" id="CHEBI:29105"/>
    </cofactor>
    <text evidence="21 22">Binds 1 zinc ion per subunit.</text>
</comment>
<comment type="activity regulation">
    <text evidence="14">Helicase activity on forked duplex DNA is not inhibited by telomestatin (TMS); TMS does inhibit helicase activity on G-quadruplex DNA (PubMed:18426915).</text>
</comment>
<comment type="subunit">
    <text evidence="1 9 10 11 13 15 16 18 19 23">Monomer (PubMed:28228481). Homodimer (via N-terminus) (PubMed:28228481). Homotetramer (via N-terminus); dimer of dimers (PubMed:28228481). Homohexamer (via N-terminus) (PubMed:28228481). Self-association negatively regulates DNA unwinding amplitude and rate. Oligomeric complexes dissociate into monomer in presence of ATP (PubMed:28228481). Part of the BRCA1-associated genome surveillance complex (BASC), which contains BRCA1, MSH2, MSH6, MLH1, ATM, BLM, PMS2 and the RAD50-MRE11-NBS1 protein complex. This association could be a dynamic process changing throughout the cell cycle and within subnuclear domains. Interacts with RMI complex. Interacts directly with RMI1 (via N-terminal region) component of RMI complex. Found in a complex, at least composed of BLM, RAD51 and SPIDR; the complex formation is mediated by SPIDR. Interacts with the KHDC3L/FILIA-OOEP/FLOPED scaffold complex and TRIM25 at DNA replication forks (By similarity). Interacts with ubiquitinated FANCD2 (PubMed:15257300). Interacts with SUPV3L1 (PubMed:17961633). Interacts with TOP3A (via N-terminal region). Interacts with SPIDR (via C-terminal region); the interaction is direct and required to target BLM to sites of DNA damage.</text>
</comment>
<comment type="interaction">
    <interactant intactId="EBI-621372">
        <id>P54132</id>
    </interactant>
    <interactant intactId="EBI-3509650">
        <id>Q9BX63</id>
        <label>BRIP1</label>
    </interactant>
    <organismsDiffer>false</organismsDiffer>
    <experiments>16</experiments>
</comment>
<comment type="interaction">
    <interactant intactId="EBI-621372">
        <id>P54132</id>
    </interactant>
    <interactant intactId="EBI-707816">
        <id>P39748</id>
        <label>FEN1</label>
    </interactant>
    <organismsDiffer>false</organismsDiffer>
    <experiments>4</experiments>
</comment>
<comment type="interaction">
    <interactant intactId="EBI-621372">
        <id>P54132</id>
    </interactant>
    <interactant intactId="EBI-2120336">
        <id>Q9BQ15</id>
        <label>NABP2</label>
    </interactant>
    <organismsDiffer>false</organismsDiffer>
    <experiments>6</experiments>
</comment>
<comment type="interaction">
    <interactant intactId="EBI-621372">
        <id>P54132</id>
    </interactant>
    <interactant intactId="EBI-476768">
        <id>P53350</id>
        <label>PLK1</label>
    </interactant>
    <organismsDiffer>false</organismsDiffer>
    <experiments>4</experiments>
</comment>
<comment type="interaction">
    <interactant intactId="EBI-621372">
        <id>P54132</id>
    </interactant>
    <interactant intactId="EBI-1055693">
        <id>O75771</id>
        <label>RAD51D</label>
    </interactant>
    <organismsDiffer>false</organismsDiffer>
    <experiments>4</experiments>
</comment>
<comment type="interaction">
    <interactant intactId="EBI-621372">
        <id>P54132</id>
    </interactant>
    <interactant intactId="EBI-621339">
        <id>Q9H9A7</id>
        <label>RMI1</label>
    </interactant>
    <organismsDiffer>false</organismsDiffer>
    <experiments>16</experiments>
</comment>
<comment type="interaction">
    <interactant intactId="EBI-621372">
        <id>P54132</id>
    </interactant>
    <interactant intactId="EBI-621389">
        <id>P27694</id>
        <label>RPA1</label>
    </interactant>
    <organismsDiffer>false</organismsDiffer>
    <experiments>4</experiments>
</comment>
<comment type="interaction">
    <interactant intactId="EBI-621372">
        <id>P54132</id>
    </interactant>
    <interactant intactId="EBI-356336">
        <id>P42677</id>
        <label>RPS27</label>
    </interactant>
    <organismsDiffer>false</organismsDiffer>
    <experiments>4</experiments>
</comment>
<comment type="interaction">
    <interactant intactId="EBI-621372">
        <id>P54132</id>
    </interactant>
    <interactant intactId="EBI-11318692">
        <id>Q14159</id>
        <label>SPIDR</label>
    </interactant>
    <organismsDiffer>false</organismsDiffer>
    <experiments>11</experiments>
</comment>
<comment type="interaction">
    <interactant intactId="EBI-621372">
        <id>P54132</id>
    </interactant>
    <interactant intactId="EBI-710997">
        <id>P54274</id>
        <label>TERF1</label>
    </interactant>
    <organismsDiffer>false</organismsDiffer>
    <experiments>3</experiments>
</comment>
<comment type="interaction">
    <interactant intactId="EBI-621372">
        <id>P54132</id>
    </interactant>
    <interactant intactId="EBI-706637">
        <id>Q15554</id>
        <label>TERF2</label>
    </interactant>
    <organismsDiffer>false</organismsDiffer>
    <experiments>8</experiments>
</comment>
<comment type="interaction">
    <interactant intactId="EBI-621372">
        <id>P54132</id>
    </interactant>
    <interactant intactId="EBI-621345">
        <id>Q13472</id>
        <label>TOP3A</label>
    </interactant>
    <organismsDiffer>false</organismsDiffer>
    <experiments>10</experiments>
</comment>
<comment type="interaction">
    <interactant intactId="EBI-621372">
        <id>P54132</id>
    </interactant>
    <interactant intactId="EBI-725300">
        <id>Q96RL1</id>
        <label>UIMC1</label>
    </interactant>
    <organismsDiffer>false</organismsDiffer>
    <experiments>2</experiments>
</comment>
<comment type="interaction">
    <interactant intactId="EBI-621372">
        <id>P54132</id>
    </interactant>
    <interactant intactId="EBI-368417">
        <id>Q14191</id>
        <label>WRN</label>
    </interactant>
    <organismsDiffer>false</organismsDiffer>
    <experiments>9</experiments>
</comment>
<comment type="subcellular location">
    <subcellularLocation>
        <location evidence="19">Nucleus</location>
    </subcellularLocation>
    <text>Together with SPIDR, is redistributed in discrete nuclear DNA damage-induced foci following hydroxyurea (HU) or camptothecin (CPT) treatment. Accumulated at sites of DNA damage in a RMI complex- and SPIDR-dependent manner.</text>
</comment>
<comment type="domain">
    <text evidence="17 22 23">The N-terminal region mediates dimerization and homooligomerization (PubMed:28228481). Both the helicase ATP-binding domain and the helicase C-terminal domain form intramolecular interactions with the HRDC domain in a ATP-dependent manner (PubMed:25901030). The HRDC domain is required for single-stranded DNA (ssDNA) and DNA Holliday junction binding (PubMed:20639533).</text>
</comment>
<comment type="PTM">
    <text evidence="1 25">Poly-ubiquitinated by TRIM25 at Lys-259 (By similarity). Deubiquitinated by USP37; leading to stabilization in order to sustain the DNA damage response (PubMed:34606619).</text>
</comment>
<comment type="PTM">
    <text evidence="9 10">Phosphorylated in response to DNA damage. Phosphorylation requires the FANCA-FANCC-FANCE-FANCF-FANCG protein complex, as well as the presence of RMI1.</text>
</comment>
<comment type="PTM">
    <text evidence="24">(Microbial infection) Sumoylation of BLM is decreased by HIV-1 Vpu protein, unleashing end degradation of viral cDNA.</text>
</comment>
<comment type="disease" evidence="7 12 26 27">
    <disease id="DI-00191">
        <name>Bloom syndrome</name>
        <acronym>BLM</acronym>
        <description>An autosomal recessive disorder. It is characterized by proportionate pre- and postnatal growth deficiency, sun-sensitive telangiectatic hypo- and hyperpigmented skin, predisposition to malignancy, and chromosomal instability.</description>
        <dbReference type="MIM" id="210900"/>
    </disease>
    <text>The disease is caused by variants affecting the gene represented in this entry.</text>
</comment>
<comment type="similarity">
    <text evidence="31">Belongs to the helicase family. RecQ subfamily.</text>
</comment>
<comment type="online information" name="BLMbase">
    <link uri="https://databases.lovd.nl/shared/genes/BLM"/>
    <text>BLM mutation db</text>
</comment>
<comment type="online information" name="Atlas of Genetics and Cytogenetics in Oncology and Haematology">
    <link uri="https://atlasgeneticsoncology.org/gene/109/BLM"/>
</comment>
<protein>
    <recommendedName>
        <fullName evidence="31">RecQ-like DNA helicase BLM</fullName>
        <ecNumber evidence="21 22 28 29">5.6.2.4</ecNumber>
    </recommendedName>
    <alternativeName>
        <fullName>Bloom syndrome protein</fullName>
    </alternativeName>
    <alternativeName>
        <fullName evidence="31">DNA 3'-5' helicase BLM</fullName>
    </alternativeName>
    <alternativeName>
        <fullName>DNA helicase, RecQ-like type 2</fullName>
        <shortName>RecQ2</shortName>
    </alternativeName>
    <alternativeName>
        <fullName>RecQ protein-like 3</fullName>
    </alternativeName>
</protein>
<organism>
    <name type="scientific">Homo sapiens</name>
    <name type="common">Human</name>
    <dbReference type="NCBI Taxonomy" id="9606"/>
    <lineage>
        <taxon>Eukaryota</taxon>
        <taxon>Metazoa</taxon>
        <taxon>Chordata</taxon>
        <taxon>Craniata</taxon>
        <taxon>Vertebrata</taxon>
        <taxon>Euteleostomi</taxon>
        <taxon>Mammalia</taxon>
        <taxon>Eutheria</taxon>
        <taxon>Euarchontoglires</taxon>
        <taxon>Primates</taxon>
        <taxon>Haplorrhini</taxon>
        <taxon>Catarrhini</taxon>
        <taxon>Hominidae</taxon>
        <taxon>Homo</taxon>
    </lineage>
</organism>
<sequence length="1417" mass="159000">MAAVPQNNLQEQLERHSARTLNNKLSLSKPKFSGFTFKKKTSSDNNVSVTNVSVAKTPVLRNKDVNVTEDFSFSEPLPNTTNQQRVKDFFKNAPAGQETQRGGSKSLLPDFLQTPKEVVCTTQNTPTVKKSRDTALKKLEFSSSPDSLSTINDWDDMDDFDTSETSKSFVTPPQSHFVRVSTAQKSKKGKRNFFKAQLYTTNTVKTDLPPPSSESEQIDLTEEQKDDSEWLSSDVICIDDGPIAEVHINEDAQESDSLKTHLEDERDNSEKKKNLEEAELHSTEKVPCIEFDDDDYDTDFVPPSPEEIISASSSSSKCLSTLKDLDTSDRKEDVLSTSKDLLSKPEKMSMQELNPETSTDCDARQISLQQQLIHVMEHICKLIDTIPDDKLKLLDCGNELLQQRNIRRKLLTEVDFNKSDASLLGSLWRYRPDSLDGPMEGDSCPTGNSMKELNFSHLPSNSVSPGDCLLTTTLGKTGFSATRKNLFERPLFNTHLQKSFVSSNWAETPRLGKKNESSYFPGNVLTSTAVKDQNKHTASINDLERETQPSYDIDNFDIDDFDDDDDWEDIMHNLAASKSSTAAYQPIKEGRPIKSVSERLSSAKTDCLPVSSTAQNINFSESIQNYTDKSAQNLASRNLKHERFQSLSFPHTKEMMKIFHKKFGLHNFRTNQLEAINAALLGEDCFILMPTGGGKSLCYQLPACVSPGVTVVISPLRSLIVDQVQKLTSLDIPATYLTGDKTDSEATNIYLQLSKKDPIIKLLYVTPEKICASNRLISTLENLYERKLLARFVIDEAHCVSQWGHDFRQDYKRMNMLRQKFPSVPVMALTATANPRVQKDILTQLKILRPQVFSMSFNRHNLKYYVLPKKPKKVAFDCLEWIRKHHPYDSGIIYCLSRRECDTMADTLQRDGLAALAYHAGLSDSARDEVQQKWINQDGCQVICATIAFGMGIDKPDVRFVIHASLPKSVEGYYQESGRAGRDGEISHCLLFYTYHDVTRLKRLIMMEKDGNHHTRETHFNNLYSMVHYCENITECRRIQLLAYFGENGFNPDFCKKHPDVSCDNCCKTKDYKTRDVTDDVKSIVRFVQEHSSSQGMRNIKHVGPSGRFTMNMLVDIFLGSKSAKIQSGIFGKGSAYSRHNAERLFKKLILDKILDEDLYINANDQAIAYVMLGNKAQTVLNGNLKVDFMETENSSSVKKQKALVAKVSQREEMVKKCLGELTEVCKSLGKVFGVHYFNIFNTVTLKKLAESLSSDPEVLLQIDGVTEDKLEKYGAEVISVLQKYSEWTSPAEDSSPGISLSSSRGPGRSAAEELDEEIPVSSHYFASKTRNERKRKKMPASQRSKRRKTASSGSKAKGGSATCRKISSKTKSSSIIGSSSASHTSQATSGANSKLGIMAPPKPINRPFLKPSYAFS</sequence>
<dbReference type="EC" id="5.6.2.4" evidence="21 22 28 29"/>
<dbReference type="EMBL" id="U39817">
    <property type="protein sequence ID" value="AAA87850.1"/>
    <property type="molecule type" value="mRNA"/>
</dbReference>
<dbReference type="EMBL" id="AY886902">
    <property type="protein sequence ID" value="AAW62255.1"/>
    <property type="molecule type" value="Genomic_DNA"/>
</dbReference>
<dbReference type="EMBL" id="BC093622">
    <property type="protein sequence ID" value="AAH93622.1"/>
    <property type="molecule type" value="mRNA"/>
</dbReference>
<dbReference type="EMBL" id="BC101567">
    <property type="protein sequence ID" value="AAI01568.1"/>
    <property type="molecule type" value="mRNA"/>
</dbReference>
<dbReference type="EMBL" id="BC115030">
    <property type="protein sequence ID" value="AAI15031.1"/>
    <property type="molecule type" value="mRNA"/>
</dbReference>
<dbReference type="EMBL" id="BC115032">
    <property type="protein sequence ID" value="AAI15033.1"/>
    <property type="molecule type" value="mRNA"/>
</dbReference>
<dbReference type="CCDS" id="CCDS10363.1"/>
<dbReference type="PIR" id="A57570">
    <property type="entry name" value="A57570"/>
</dbReference>
<dbReference type="RefSeq" id="NP_000048.1">
    <property type="nucleotide sequence ID" value="NM_000057.4"/>
</dbReference>
<dbReference type="RefSeq" id="NP_001274175.1">
    <property type="nucleotide sequence ID" value="NM_001287246.2"/>
</dbReference>
<dbReference type="RefSeq" id="NP_001274176.1">
    <property type="nucleotide sequence ID" value="NM_001287247.1"/>
</dbReference>
<dbReference type="RefSeq" id="NP_001274177.1">
    <property type="nucleotide sequence ID" value="NM_001287248.1"/>
</dbReference>
<dbReference type="PDB" id="2KV2">
    <property type="method" value="NMR"/>
    <property type="chains" value="A=1210-1294"/>
</dbReference>
<dbReference type="PDB" id="2MH9">
    <property type="method" value="NMR"/>
    <property type="chains" value="A=1067-1210"/>
</dbReference>
<dbReference type="PDB" id="2RRD">
    <property type="method" value="NMR"/>
    <property type="chains" value="A=1200-1295"/>
</dbReference>
<dbReference type="PDB" id="3WE2">
    <property type="method" value="X-ray"/>
    <property type="resolution" value="2.70 A"/>
    <property type="chains" value="A/B=1068-1209"/>
</dbReference>
<dbReference type="PDB" id="3WE3">
    <property type="method" value="X-ray"/>
    <property type="resolution" value="2.90 A"/>
    <property type="chains" value="A/B=1068-1209"/>
</dbReference>
<dbReference type="PDB" id="4CDG">
    <property type="method" value="X-ray"/>
    <property type="resolution" value="2.79 A"/>
    <property type="chains" value="A/B=636-1298"/>
</dbReference>
<dbReference type="PDB" id="4CGZ">
    <property type="method" value="X-ray"/>
    <property type="resolution" value="3.20 A"/>
    <property type="chains" value="A=636-1298"/>
</dbReference>
<dbReference type="PDB" id="4O3M">
    <property type="method" value="X-ray"/>
    <property type="resolution" value="2.30 A"/>
    <property type="chains" value="A=640-1298"/>
</dbReference>
<dbReference type="PDB" id="5LUP">
    <property type="method" value="X-ray"/>
    <property type="resolution" value="2.03 A"/>
    <property type="chains" value="A/B/C/D/E/F/G/H/I/J/K/L=362-414"/>
</dbReference>
<dbReference type="PDB" id="5MK5">
    <property type="method" value="X-ray"/>
    <property type="resolution" value="2.16 A"/>
    <property type="chains" value="A/B/C/D=362-414"/>
</dbReference>
<dbReference type="PDB" id="5U6K">
    <property type="method" value="X-ray"/>
    <property type="resolution" value="2.60 A"/>
    <property type="chains" value="L/M/N/O=297-309"/>
</dbReference>
<dbReference type="PDB" id="7AUC">
    <property type="method" value="X-ray"/>
    <property type="resolution" value="1.53 A"/>
    <property type="chains" value="A=636-1070, A=1202-1298"/>
</dbReference>
<dbReference type="PDB" id="7AUD">
    <property type="method" value="X-ray"/>
    <property type="resolution" value="2.96 A"/>
    <property type="chains" value="A/B/C/D/E/F=636-1070, A/B/C/D/E/F=1202-1298"/>
</dbReference>
<dbReference type="PDB" id="7XUW">
    <property type="method" value="X-ray"/>
    <property type="resolution" value="1.80 A"/>
    <property type="chains" value="A=550-570"/>
</dbReference>
<dbReference type="PDB" id="7XV0">
    <property type="method" value="X-ray"/>
    <property type="resolution" value="1.50 A"/>
    <property type="chains" value="B=146-165"/>
</dbReference>
<dbReference type="PDBsum" id="2KV2"/>
<dbReference type="PDBsum" id="2MH9"/>
<dbReference type="PDBsum" id="2RRD"/>
<dbReference type="PDBsum" id="3WE2"/>
<dbReference type="PDBsum" id="3WE3"/>
<dbReference type="PDBsum" id="4CDG"/>
<dbReference type="PDBsum" id="4CGZ"/>
<dbReference type="PDBsum" id="4O3M"/>
<dbReference type="PDBsum" id="5LUP"/>
<dbReference type="PDBsum" id="5MK5"/>
<dbReference type="PDBsum" id="5U6K"/>
<dbReference type="PDBsum" id="7AUC"/>
<dbReference type="PDBsum" id="7AUD"/>
<dbReference type="PDBsum" id="7XUW"/>
<dbReference type="PDBsum" id="7XV0"/>
<dbReference type="BMRB" id="P54132"/>
<dbReference type="SMR" id="P54132"/>
<dbReference type="BioGRID" id="107110">
    <property type="interactions" value="258"/>
</dbReference>
<dbReference type="ComplexPortal" id="CPX-3301">
    <property type="entry name" value="BTR double Holliday Junction dissolution complex"/>
</dbReference>
<dbReference type="CORUM" id="P54132"/>
<dbReference type="DIP" id="DIP-33322N"/>
<dbReference type="ELM" id="P54132"/>
<dbReference type="FunCoup" id="P54132">
    <property type="interactions" value="1696"/>
</dbReference>
<dbReference type="IntAct" id="P54132">
    <property type="interactions" value="127"/>
</dbReference>
<dbReference type="MINT" id="P54132"/>
<dbReference type="STRING" id="9606.ENSP00000347232"/>
<dbReference type="BindingDB" id="P54132"/>
<dbReference type="ChEMBL" id="CHEMBL1293237"/>
<dbReference type="GuidetoPHARMACOLOGY" id="3260"/>
<dbReference type="GlyGen" id="P54132">
    <property type="glycosylation" value="4 sites, 1 N-linked glycan (1 site), 1 O-linked glycan (2 sites)"/>
</dbReference>
<dbReference type="iPTMnet" id="P54132"/>
<dbReference type="PhosphoSitePlus" id="P54132"/>
<dbReference type="BioMuta" id="BLM"/>
<dbReference type="DMDM" id="1705486"/>
<dbReference type="jPOST" id="P54132"/>
<dbReference type="MassIVE" id="P54132"/>
<dbReference type="PaxDb" id="9606-ENSP00000347232"/>
<dbReference type="PeptideAtlas" id="P54132"/>
<dbReference type="ProteomicsDB" id="56649"/>
<dbReference type="Pumba" id="P54132"/>
<dbReference type="ABCD" id="P54132">
    <property type="antibodies" value="1 sequenced antibody"/>
</dbReference>
<dbReference type="Antibodypedia" id="704">
    <property type="antibodies" value="496 antibodies from 37 providers"/>
</dbReference>
<dbReference type="DNASU" id="641"/>
<dbReference type="Ensembl" id="ENST00000355112.8">
    <property type="protein sequence ID" value="ENSP00000347232.3"/>
    <property type="gene ID" value="ENSG00000197299.13"/>
</dbReference>
<dbReference type="Ensembl" id="ENST00000680772.1">
    <property type="protein sequence ID" value="ENSP00000506117.1"/>
    <property type="gene ID" value="ENSG00000197299.13"/>
</dbReference>
<dbReference type="GeneID" id="641"/>
<dbReference type="KEGG" id="hsa:641"/>
<dbReference type="MANE-Select" id="ENST00000355112.8">
    <property type="protein sequence ID" value="ENSP00000347232.3"/>
    <property type="RefSeq nucleotide sequence ID" value="NM_000057.4"/>
    <property type="RefSeq protein sequence ID" value="NP_000048.1"/>
</dbReference>
<dbReference type="UCSC" id="uc002bpr.5">
    <property type="organism name" value="human"/>
</dbReference>
<dbReference type="AGR" id="HGNC:1058"/>
<dbReference type="CTD" id="641"/>
<dbReference type="DisGeNET" id="641"/>
<dbReference type="GeneCards" id="BLM"/>
<dbReference type="GeneReviews" id="BLM"/>
<dbReference type="HGNC" id="HGNC:1058">
    <property type="gene designation" value="BLM"/>
</dbReference>
<dbReference type="HPA" id="ENSG00000197299">
    <property type="expression patterns" value="Tissue enhanced (bone marrow, lymphoid tissue, salivary gland)"/>
</dbReference>
<dbReference type="MalaCards" id="BLM"/>
<dbReference type="MIM" id="210900">
    <property type="type" value="phenotype"/>
</dbReference>
<dbReference type="MIM" id="604610">
    <property type="type" value="gene"/>
</dbReference>
<dbReference type="neXtProt" id="NX_P54132"/>
<dbReference type="OpenTargets" id="ENSG00000197299"/>
<dbReference type="Orphanet" id="125">
    <property type="disease" value="Bloom syndrome"/>
</dbReference>
<dbReference type="PharmGKB" id="PA25369"/>
<dbReference type="VEuPathDB" id="HostDB:ENSG00000197299"/>
<dbReference type="eggNOG" id="KOG0351">
    <property type="taxonomic scope" value="Eukaryota"/>
</dbReference>
<dbReference type="GeneTree" id="ENSGT00940000156800"/>
<dbReference type="HOGENOM" id="CLU_001103_1_1_1"/>
<dbReference type="InParanoid" id="P54132"/>
<dbReference type="OMA" id="STTCRRM"/>
<dbReference type="OrthoDB" id="10261556at2759"/>
<dbReference type="PAN-GO" id="P54132">
    <property type="GO annotations" value="9 GO annotations based on evolutionary models"/>
</dbReference>
<dbReference type="PhylomeDB" id="P54132"/>
<dbReference type="TreeFam" id="TF317801"/>
<dbReference type="BRENDA" id="3.6.4.12">
    <property type="organism ID" value="2681"/>
</dbReference>
<dbReference type="PathwayCommons" id="P54132"/>
<dbReference type="Reactome" id="R-HSA-174414">
    <property type="pathway name" value="Processive synthesis on the C-strand of the telomere"/>
</dbReference>
<dbReference type="Reactome" id="R-HSA-3108214">
    <property type="pathway name" value="SUMOylation of DNA damage response and repair proteins"/>
</dbReference>
<dbReference type="Reactome" id="R-HSA-5685938">
    <property type="pathway name" value="HDR through Single Strand Annealing (SSA)"/>
</dbReference>
<dbReference type="Reactome" id="R-HSA-5685942">
    <property type="pathway name" value="HDR through Homologous Recombination (HRR)"/>
</dbReference>
<dbReference type="Reactome" id="R-HSA-5693554">
    <property type="pathway name" value="Resolution of D-loop Structures through Synthesis-Dependent Strand Annealing (SDSA)"/>
</dbReference>
<dbReference type="Reactome" id="R-HSA-5693568">
    <property type="pathway name" value="Resolution of D-loop Structures through Holliday Junction Intermediates"/>
</dbReference>
<dbReference type="Reactome" id="R-HSA-5693579">
    <property type="pathway name" value="Homologous DNA Pairing and Strand Exchange"/>
</dbReference>
<dbReference type="Reactome" id="R-HSA-5693607">
    <property type="pathway name" value="Processing of DNA double-strand break ends"/>
</dbReference>
<dbReference type="Reactome" id="R-HSA-5693616">
    <property type="pathway name" value="Presynaptic phase of homologous DNA pairing and strand exchange"/>
</dbReference>
<dbReference type="Reactome" id="R-HSA-6804756">
    <property type="pathway name" value="Regulation of TP53 Activity through Phosphorylation"/>
</dbReference>
<dbReference type="Reactome" id="R-HSA-69473">
    <property type="pathway name" value="G2/M DNA damage checkpoint"/>
</dbReference>
<dbReference type="Reactome" id="R-HSA-912446">
    <property type="pathway name" value="Meiotic recombination"/>
</dbReference>
<dbReference type="Reactome" id="R-HSA-9701192">
    <property type="pathway name" value="Defective homologous recombination repair (HRR) due to BRCA1 loss of function"/>
</dbReference>
<dbReference type="Reactome" id="R-HSA-9704331">
    <property type="pathway name" value="Defective HDR through Homologous Recombination Repair (HRR) due to PALB2 loss of BRCA1 binding function"/>
</dbReference>
<dbReference type="Reactome" id="R-HSA-9704646">
    <property type="pathway name" value="Defective HDR through Homologous Recombination Repair (HRR) due to PALB2 loss of BRCA2/RAD51/RAD51C binding function"/>
</dbReference>
<dbReference type="Reactome" id="R-HSA-9709570">
    <property type="pathway name" value="Impaired BRCA2 binding to RAD51"/>
</dbReference>
<dbReference type="Reactome" id="R-HSA-9709603">
    <property type="pathway name" value="Impaired BRCA2 binding to PALB2"/>
</dbReference>
<dbReference type="SignaLink" id="P54132"/>
<dbReference type="SIGNOR" id="P54132"/>
<dbReference type="BioGRID-ORCS" id="641">
    <property type="hits" value="128 hits in 1175 CRISPR screens"/>
</dbReference>
<dbReference type="CD-CODE" id="91857CE7">
    <property type="entry name" value="Nucleolus"/>
</dbReference>
<dbReference type="CD-CODE" id="B55775CA">
    <property type="entry name" value="SSB condensate"/>
</dbReference>
<dbReference type="CD-CODE" id="B5B9A610">
    <property type="entry name" value="PML body"/>
</dbReference>
<dbReference type="CD-CODE" id="BBD49DEB">
    <property type="entry name" value="BLM"/>
</dbReference>
<dbReference type="ChiTaRS" id="BLM">
    <property type="organism name" value="human"/>
</dbReference>
<dbReference type="EvolutionaryTrace" id="P54132"/>
<dbReference type="GeneWiki" id="Bloom_syndrome_protein"/>
<dbReference type="GenomeRNAi" id="641"/>
<dbReference type="Pharos" id="P54132">
    <property type="development level" value="Tchem"/>
</dbReference>
<dbReference type="PRO" id="PR:P54132"/>
<dbReference type="Proteomes" id="UP000005640">
    <property type="component" value="Chromosome 15"/>
</dbReference>
<dbReference type="RNAct" id="P54132">
    <property type="molecule type" value="protein"/>
</dbReference>
<dbReference type="Bgee" id="ENSG00000197299">
    <property type="expression patterns" value="Expressed in parotid gland and 134 other cell types or tissues"/>
</dbReference>
<dbReference type="ExpressionAtlas" id="P54132">
    <property type="expression patterns" value="baseline and differential"/>
</dbReference>
<dbReference type="GO" id="GO:0005694">
    <property type="term" value="C:chromosome"/>
    <property type="evidence" value="ECO:0000318"/>
    <property type="project" value="GO_Central"/>
</dbReference>
<dbReference type="GO" id="GO:0005737">
    <property type="term" value="C:cytoplasm"/>
    <property type="evidence" value="ECO:0000318"/>
    <property type="project" value="GO_Central"/>
</dbReference>
<dbReference type="GO" id="GO:0005829">
    <property type="term" value="C:cytosol"/>
    <property type="evidence" value="ECO:0000314"/>
    <property type="project" value="HPA"/>
</dbReference>
<dbReference type="GO" id="GO:0000800">
    <property type="term" value="C:lateral element"/>
    <property type="evidence" value="ECO:0000314"/>
    <property type="project" value="UniProtKB"/>
</dbReference>
<dbReference type="GO" id="GO:0000228">
    <property type="term" value="C:nuclear chromosome"/>
    <property type="evidence" value="ECO:0000314"/>
    <property type="project" value="UniProtKB"/>
</dbReference>
<dbReference type="GO" id="GO:0016363">
    <property type="term" value="C:nuclear matrix"/>
    <property type="evidence" value="ECO:0000314"/>
    <property type="project" value="UniProtKB"/>
</dbReference>
<dbReference type="GO" id="GO:0005730">
    <property type="term" value="C:nucleolus"/>
    <property type="evidence" value="ECO:0000314"/>
    <property type="project" value="UniProtKB"/>
</dbReference>
<dbReference type="GO" id="GO:0005654">
    <property type="term" value="C:nucleoplasm"/>
    <property type="evidence" value="ECO:0000314"/>
    <property type="project" value="HPA"/>
</dbReference>
<dbReference type="GO" id="GO:0005634">
    <property type="term" value="C:nucleus"/>
    <property type="evidence" value="ECO:0000314"/>
    <property type="project" value="UniProtKB"/>
</dbReference>
<dbReference type="GO" id="GO:0016605">
    <property type="term" value="C:PML body"/>
    <property type="evidence" value="ECO:0000314"/>
    <property type="project" value="UniProtKB"/>
</dbReference>
<dbReference type="GO" id="GO:0032991">
    <property type="term" value="C:protein-containing complex"/>
    <property type="evidence" value="ECO:0000314"/>
    <property type="project" value="UniProtKB"/>
</dbReference>
<dbReference type="GO" id="GO:0031422">
    <property type="term" value="C:RecQ family helicase-topoisomerase III complex"/>
    <property type="evidence" value="ECO:0000353"/>
    <property type="project" value="ComplexPortal"/>
</dbReference>
<dbReference type="GO" id="GO:0005657">
    <property type="term" value="C:replication fork"/>
    <property type="evidence" value="ECO:0000250"/>
    <property type="project" value="BHF-UCL"/>
</dbReference>
<dbReference type="GO" id="GO:0043138">
    <property type="term" value="F:3'-5' DNA helicase activity"/>
    <property type="evidence" value="ECO:0000314"/>
    <property type="project" value="UniProtKB"/>
</dbReference>
<dbReference type="GO" id="GO:1905773">
    <property type="term" value="F:8-hydroxy-2'-deoxyguanosine DNA binding"/>
    <property type="evidence" value="ECO:0000314"/>
    <property type="project" value="BHF-UCL"/>
</dbReference>
<dbReference type="GO" id="GO:0005524">
    <property type="term" value="F:ATP binding"/>
    <property type="evidence" value="ECO:0000314"/>
    <property type="project" value="UniProtKB"/>
</dbReference>
<dbReference type="GO" id="GO:0016887">
    <property type="term" value="F:ATP hydrolysis activity"/>
    <property type="evidence" value="ECO:0007669"/>
    <property type="project" value="RHEA"/>
</dbReference>
<dbReference type="GO" id="GO:0008094">
    <property type="term" value="F:ATP-dependent activity, acting on DNA"/>
    <property type="evidence" value="ECO:0000314"/>
    <property type="project" value="UniProtKB"/>
</dbReference>
<dbReference type="GO" id="GO:0000405">
    <property type="term" value="F:bubble DNA binding"/>
    <property type="evidence" value="ECO:0000314"/>
    <property type="project" value="UniProtKB"/>
</dbReference>
<dbReference type="GO" id="GO:0003677">
    <property type="term" value="F:DNA binding"/>
    <property type="evidence" value="ECO:0000314"/>
    <property type="project" value="UniProtKB"/>
</dbReference>
<dbReference type="GO" id="GO:0003678">
    <property type="term" value="F:DNA helicase activity"/>
    <property type="evidence" value="ECO:0000314"/>
    <property type="project" value="UniProtKB"/>
</dbReference>
<dbReference type="GO" id="GO:1990814">
    <property type="term" value="F:DNA/DNA annealing activity"/>
    <property type="evidence" value="ECO:0000314"/>
    <property type="project" value="GO_Central"/>
</dbReference>
<dbReference type="GO" id="GO:0061749">
    <property type="term" value="F:forked DNA-dependent helicase activity"/>
    <property type="evidence" value="ECO:0000314"/>
    <property type="project" value="UniProtKB"/>
</dbReference>
<dbReference type="GO" id="GO:0000400">
    <property type="term" value="F:four-way junction DNA binding"/>
    <property type="evidence" value="ECO:0000314"/>
    <property type="project" value="UniProtKB"/>
</dbReference>
<dbReference type="GO" id="GO:0009378">
    <property type="term" value="F:four-way junction helicase activity"/>
    <property type="evidence" value="ECO:0000314"/>
    <property type="project" value="UniProtKB"/>
</dbReference>
<dbReference type="GO" id="GO:0051880">
    <property type="term" value="F:G-quadruplex DNA binding"/>
    <property type="evidence" value="ECO:0000314"/>
    <property type="project" value="UniProtKB"/>
</dbReference>
<dbReference type="GO" id="GO:0004386">
    <property type="term" value="F:helicase activity"/>
    <property type="evidence" value="ECO:0000314"/>
    <property type="project" value="UniProtKB"/>
</dbReference>
<dbReference type="GO" id="GO:0042802">
    <property type="term" value="F:identical protein binding"/>
    <property type="evidence" value="ECO:0000314"/>
    <property type="project" value="UniProtKB"/>
</dbReference>
<dbReference type="GO" id="GO:0002039">
    <property type="term" value="F:p53 binding"/>
    <property type="evidence" value="ECO:0000353"/>
    <property type="project" value="UniProtKB"/>
</dbReference>
<dbReference type="GO" id="GO:0042803">
    <property type="term" value="F:protein homodimerization activity"/>
    <property type="evidence" value="ECO:0000314"/>
    <property type="project" value="UniProtKB"/>
</dbReference>
<dbReference type="GO" id="GO:0003697">
    <property type="term" value="F:single-stranded DNA binding"/>
    <property type="evidence" value="ECO:0000314"/>
    <property type="project" value="UniProtKB"/>
</dbReference>
<dbReference type="GO" id="GO:0061821">
    <property type="term" value="F:telomeric D-loop binding"/>
    <property type="evidence" value="ECO:0000314"/>
    <property type="project" value="BHF-UCL"/>
</dbReference>
<dbReference type="GO" id="GO:0061849">
    <property type="term" value="F:telomeric G-quadruplex DNA binding"/>
    <property type="evidence" value="ECO:0000314"/>
    <property type="project" value="BHF-UCL"/>
</dbReference>
<dbReference type="GO" id="GO:0000403">
    <property type="term" value="F:Y-form DNA binding"/>
    <property type="evidence" value="ECO:0000314"/>
    <property type="project" value="BHF-UCL"/>
</dbReference>
<dbReference type="GO" id="GO:0008270">
    <property type="term" value="F:zinc ion binding"/>
    <property type="evidence" value="ECO:0000314"/>
    <property type="project" value="UniProtKB"/>
</dbReference>
<dbReference type="GO" id="GO:0072757">
    <property type="term" value="P:cellular response to camptothecin"/>
    <property type="evidence" value="ECO:0000314"/>
    <property type="project" value="UniProtKB"/>
</dbReference>
<dbReference type="GO" id="GO:0072711">
    <property type="term" value="P:cellular response to hydroxyurea"/>
    <property type="evidence" value="ECO:0000314"/>
    <property type="project" value="UniProtKB"/>
</dbReference>
<dbReference type="GO" id="GO:0071479">
    <property type="term" value="P:cellular response to ionizing radiation"/>
    <property type="evidence" value="ECO:0000314"/>
    <property type="project" value="UniProtKB"/>
</dbReference>
<dbReference type="GO" id="GO:0006974">
    <property type="term" value="P:DNA damage response"/>
    <property type="evidence" value="ECO:0000314"/>
    <property type="project" value="UniProtKB"/>
</dbReference>
<dbReference type="GO" id="GO:0000729">
    <property type="term" value="P:DNA double-strand break processing"/>
    <property type="evidence" value="ECO:0000314"/>
    <property type="project" value="UniProtKB"/>
</dbReference>
<dbReference type="GO" id="GO:0032392">
    <property type="term" value="P:DNA geometric change"/>
    <property type="evidence" value="ECO:0000314"/>
    <property type="project" value="BHF-UCL"/>
</dbReference>
<dbReference type="GO" id="GO:0006310">
    <property type="term" value="P:DNA recombination"/>
    <property type="evidence" value="ECO:0000303"/>
    <property type="project" value="UniProtKB"/>
</dbReference>
<dbReference type="GO" id="GO:0006281">
    <property type="term" value="P:DNA repair"/>
    <property type="evidence" value="ECO:0000303"/>
    <property type="project" value="UniProtKB"/>
</dbReference>
<dbReference type="GO" id="GO:0006260">
    <property type="term" value="P:DNA replication"/>
    <property type="evidence" value="ECO:0000250"/>
    <property type="project" value="BHF-UCL"/>
</dbReference>
<dbReference type="GO" id="GO:0000724">
    <property type="term" value="P:double-strand break repair via homologous recombination"/>
    <property type="evidence" value="ECO:0000314"/>
    <property type="project" value="ComplexPortal"/>
</dbReference>
<dbReference type="GO" id="GO:0007095">
    <property type="term" value="P:mitotic G2 DNA damage checkpoint signaling"/>
    <property type="evidence" value="ECO:0000314"/>
    <property type="project" value="UniProtKB"/>
</dbReference>
<dbReference type="GO" id="GO:0051782">
    <property type="term" value="P:negative regulation of cell division"/>
    <property type="evidence" value="ECO:0000315"/>
    <property type="project" value="UniProtKB"/>
</dbReference>
<dbReference type="GO" id="GO:0045910">
    <property type="term" value="P:negative regulation of DNA recombination"/>
    <property type="evidence" value="ECO:0000315"/>
    <property type="project" value="UniProtKB"/>
</dbReference>
<dbReference type="GO" id="GO:0045893">
    <property type="term" value="P:positive regulation of DNA-templated transcription"/>
    <property type="evidence" value="ECO:0000314"/>
    <property type="project" value="UniProtKB"/>
</dbReference>
<dbReference type="GO" id="GO:0051259">
    <property type="term" value="P:protein complex oligomerization"/>
    <property type="evidence" value="ECO:0000314"/>
    <property type="project" value="UniProtKB"/>
</dbReference>
<dbReference type="GO" id="GO:0051260">
    <property type="term" value="P:protein homooligomerization"/>
    <property type="evidence" value="ECO:0000314"/>
    <property type="project" value="UniProtKB"/>
</dbReference>
<dbReference type="GO" id="GO:0000079">
    <property type="term" value="P:regulation of cyclin-dependent protein serine/threonine kinase activity"/>
    <property type="evidence" value="ECO:0000315"/>
    <property type="project" value="UniProtKB"/>
</dbReference>
<dbReference type="GO" id="GO:0031297">
    <property type="term" value="P:replication fork processing"/>
    <property type="evidence" value="ECO:0000314"/>
    <property type="project" value="UniProtKB"/>
</dbReference>
<dbReference type="GO" id="GO:0071139">
    <property type="term" value="P:resolution of DNA recombination intermediates"/>
    <property type="evidence" value="ECO:0000314"/>
    <property type="project" value="ComplexPortal"/>
</dbReference>
<dbReference type="GO" id="GO:0010165">
    <property type="term" value="P:response to X-ray"/>
    <property type="evidence" value="ECO:0000314"/>
    <property type="project" value="UniProtKB"/>
</dbReference>
<dbReference type="GO" id="GO:0090656">
    <property type="term" value="P:t-circle formation"/>
    <property type="evidence" value="ECO:0000304"/>
    <property type="project" value="BHF-UCL"/>
</dbReference>
<dbReference type="GO" id="GO:0000723">
    <property type="term" value="P:telomere maintenance"/>
    <property type="evidence" value="ECO:0000314"/>
    <property type="project" value="BHF-UCL"/>
</dbReference>
<dbReference type="GO" id="GO:0032201">
    <property type="term" value="P:telomere maintenance via semi-conservative replication"/>
    <property type="evidence" value="ECO:0000304"/>
    <property type="project" value="Reactome"/>
</dbReference>
<dbReference type="GO" id="GO:0061820">
    <property type="term" value="P:telomeric D-loop disassembly"/>
    <property type="evidence" value="ECO:0000314"/>
    <property type="project" value="BHF-UCL"/>
</dbReference>
<dbReference type="CDD" id="cd18016">
    <property type="entry name" value="DEXHc_RecQ2_BLM"/>
    <property type="match status" value="1"/>
</dbReference>
<dbReference type="CDD" id="cd18794">
    <property type="entry name" value="SF2_C_RecQ"/>
    <property type="match status" value="1"/>
</dbReference>
<dbReference type="DisProt" id="DP03061"/>
<dbReference type="FunFam" id="1.10.10.10:FF:000310">
    <property type="entry name" value="Bloom syndrome RecQ-like helicase"/>
    <property type="match status" value="1"/>
</dbReference>
<dbReference type="FunFam" id="1.10.150.80:FF:000003">
    <property type="entry name" value="Bloom syndrome RecQ-like helicase"/>
    <property type="match status" value="1"/>
</dbReference>
<dbReference type="FunFam" id="3.40.50.300:FF:000537">
    <property type="entry name" value="Bloom syndrome RecQ-like helicase"/>
    <property type="match status" value="1"/>
</dbReference>
<dbReference type="FunFam" id="3.40.50.300:FF:000340">
    <property type="entry name" value="Bloom syndrome, RecQ helicase"/>
    <property type="match status" value="1"/>
</dbReference>
<dbReference type="Gene3D" id="1.10.150.80">
    <property type="entry name" value="HRDC domain"/>
    <property type="match status" value="1"/>
</dbReference>
<dbReference type="Gene3D" id="3.40.50.300">
    <property type="entry name" value="P-loop containing nucleotide triphosphate hydrolases"/>
    <property type="match status" value="2"/>
</dbReference>
<dbReference type="Gene3D" id="1.10.10.10">
    <property type="entry name" value="Winged helix-like DNA-binding domain superfamily/Winged helix DNA-binding domain"/>
    <property type="match status" value="1"/>
</dbReference>
<dbReference type="InterPro" id="IPR012532">
    <property type="entry name" value="BDHCT"/>
</dbReference>
<dbReference type="InterPro" id="IPR032439">
    <property type="entry name" value="BDHCT_assoc"/>
</dbReference>
<dbReference type="InterPro" id="IPR032437">
    <property type="entry name" value="BLM_N"/>
</dbReference>
<dbReference type="InterPro" id="IPR011545">
    <property type="entry name" value="DEAD/DEAH_box_helicase_dom"/>
</dbReference>
<dbReference type="InterPro" id="IPR002464">
    <property type="entry name" value="DNA/RNA_helicase_DEAH_CS"/>
</dbReference>
<dbReference type="InterPro" id="IPR004589">
    <property type="entry name" value="DNA_helicase_ATP-dep_RecQ"/>
</dbReference>
<dbReference type="InterPro" id="IPR014001">
    <property type="entry name" value="Helicase_ATP-bd"/>
</dbReference>
<dbReference type="InterPro" id="IPR001650">
    <property type="entry name" value="Helicase_C-like"/>
</dbReference>
<dbReference type="InterPro" id="IPR010997">
    <property type="entry name" value="HRDC-like_sf"/>
</dbReference>
<dbReference type="InterPro" id="IPR002121">
    <property type="entry name" value="HRDC_dom"/>
</dbReference>
<dbReference type="InterPro" id="IPR044876">
    <property type="entry name" value="HRDC_dom_sf"/>
</dbReference>
<dbReference type="InterPro" id="IPR027417">
    <property type="entry name" value="P-loop_NTPase"/>
</dbReference>
<dbReference type="InterPro" id="IPR032284">
    <property type="entry name" value="RecQ_Zn-bd"/>
</dbReference>
<dbReference type="InterPro" id="IPR018982">
    <property type="entry name" value="RQC_domain"/>
</dbReference>
<dbReference type="InterPro" id="IPR036388">
    <property type="entry name" value="WH-like_DNA-bd_sf"/>
</dbReference>
<dbReference type="InterPro" id="IPR036390">
    <property type="entry name" value="WH_DNA-bd_sf"/>
</dbReference>
<dbReference type="NCBIfam" id="TIGR00614">
    <property type="entry name" value="recQ_fam"/>
    <property type="match status" value="1"/>
</dbReference>
<dbReference type="PANTHER" id="PTHR13710">
    <property type="entry name" value="DNA HELICASE RECQ FAMILY MEMBER"/>
    <property type="match status" value="1"/>
</dbReference>
<dbReference type="PANTHER" id="PTHR13710:SF153">
    <property type="entry name" value="RECQ-LIKE DNA HELICASE BLM"/>
    <property type="match status" value="1"/>
</dbReference>
<dbReference type="Pfam" id="PF08072">
    <property type="entry name" value="BDHCT"/>
    <property type="match status" value="1"/>
</dbReference>
<dbReference type="Pfam" id="PF16204">
    <property type="entry name" value="BDHCT_assoc"/>
    <property type="match status" value="1"/>
</dbReference>
<dbReference type="Pfam" id="PF16202">
    <property type="entry name" value="BLM_N"/>
    <property type="match status" value="1"/>
</dbReference>
<dbReference type="Pfam" id="PF00270">
    <property type="entry name" value="DEAD"/>
    <property type="match status" value="1"/>
</dbReference>
<dbReference type="Pfam" id="PF00271">
    <property type="entry name" value="Helicase_C"/>
    <property type="match status" value="1"/>
</dbReference>
<dbReference type="Pfam" id="PF00570">
    <property type="entry name" value="HRDC"/>
    <property type="match status" value="1"/>
</dbReference>
<dbReference type="Pfam" id="PF16124">
    <property type="entry name" value="RecQ_Zn_bind"/>
    <property type="match status" value="1"/>
</dbReference>
<dbReference type="Pfam" id="PF09382">
    <property type="entry name" value="RQC"/>
    <property type="match status" value="1"/>
</dbReference>
<dbReference type="SMART" id="SM00487">
    <property type="entry name" value="DEXDc"/>
    <property type="match status" value="1"/>
</dbReference>
<dbReference type="SMART" id="SM00490">
    <property type="entry name" value="HELICc"/>
    <property type="match status" value="1"/>
</dbReference>
<dbReference type="SMART" id="SM00341">
    <property type="entry name" value="HRDC"/>
    <property type="match status" value="1"/>
</dbReference>
<dbReference type="SMART" id="SM00956">
    <property type="entry name" value="RQC"/>
    <property type="match status" value="1"/>
</dbReference>
<dbReference type="SUPFAM" id="SSF47819">
    <property type="entry name" value="HRDC-like"/>
    <property type="match status" value="1"/>
</dbReference>
<dbReference type="SUPFAM" id="SSF52540">
    <property type="entry name" value="P-loop containing nucleoside triphosphate hydrolases"/>
    <property type="match status" value="2"/>
</dbReference>
<dbReference type="SUPFAM" id="SSF46785">
    <property type="entry name" value="Winged helix' DNA-binding domain"/>
    <property type="match status" value="1"/>
</dbReference>
<dbReference type="PROSITE" id="PS00690">
    <property type="entry name" value="DEAH_ATP_HELICASE"/>
    <property type="match status" value="1"/>
</dbReference>
<dbReference type="PROSITE" id="PS51192">
    <property type="entry name" value="HELICASE_ATP_BIND_1"/>
    <property type="match status" value="1"/>
</dbReference>
<dbReference type="PROSITE" id="PS51194">
    <property type="entry name" value="HELICASE_CTER"/>
    <property type="match status" value="1"/>
</dbReference>
<dbReference type="PROSITE" id="PS50967">
    <property type="entry name" value="HRDC"/>
    <property type="match status" value="1"/>
</dbReference>
<name>BLM_HUMAN</name>
<reference key="1">
    <citation type="journal article" date="1995" name="Cell">
        <title>The Bloom's syndrome gene product is homologous to RecQ helicases.</title>
        <authorList>
            <person name="Ellis N.A."/>
            <person name="Groden J."/>
            <person name="Ye T.-Z."/>
            <person name="Straughen J."/>
            <person name="Lennon D.J."/>
            <person name="Ciocci S."/>
            <person name="Proytcheva M."/>
            <person name="German J."/>
        </authorList>
    </citation>
    <scope>NUCLEOTIDE SEQUENCE [MRNA]</scope>
    <scope>VARIANTS BLM ARG-672; ILE-843 AND SER-1055</scope>
</reference>
<reference key="2">
    <citation type="journal article" date="1997" name="J. Biol. Chem.">
        <title>The Bloom's syndrome gene product is a 3'-5' DNA helicase.</title>
        <authorList>
            <person name="Karow J.K."/>
            <person name="Chakraverty R.K."/>
            <person name="Hickson I.D."/>
        </authorList>
    </citation>
    <scope>NUCLEOTIDE SEQUENCE [MRNA]</scope>
    <scope>FUNCTION</scope>
    <scope>CATALYTIC ACTIVITY</scope>
    <source>
        <tissue>B-cell</tissue>
    </source>
</reference>
<reference key="3">
    <citation type="submission" date="2005-01" db="EMBL/GenBank/DDBJ databases">
        <authorList>
            <consortium name="NIEHS SNPs program"/>
        </authorList>
    </citation>
    <scope>NUCLEOTIDE SEQUENCE [GENOMIC DNA]</scope>
    <scope>VARIANTS ARG-137; MET-298; GLN-591; LEU-868; ILE-1205; LYS-1213 AND ILE-1321</scope>
</reference>
<reference key="4">
    <citation type="journal article" date="2004" name="Genome Res.">
        <title>The status, quality, and expansion of the NIH full-length cDNA project: the Mammalian Gene Collection (MGC).</title>
        <authorList>
            <consortium name="The MGC Project Team"/>
        </authorList>
    </citation>
    <scope>NUCLEOTIDE SEQUENCE [LARGE SCALE MRNA]</scope>
</reference>
<reference key="5">
    <citation type="journal article" date="1997" name="Biochem. Biophys. Res. Commun.">
        <title>BLM (the causative gene of Bloom syndrome) protein translocation into the nucleus by a nuclear localization signal.</title>
        <authorList>
            <person name="Kaneko H."/>
            <person name="Orii K.O."/>
            <person name="Matsui E."/>
            <person name="Shimozawa N."/>
            <person name="Fukao T."/>
            <person name="Matsumoto T."/>
            <person name="Shimamoto A."/>
            <person name="Furuichi Y."/>
            <person name="Hayakawa S."/>
            <person name="Kasahara K."/>
            <person name="Kondo N."/>
        </authorList>
    </citation>
    <scope>NUCLEAR LOCALIZATION SIGNAL</scope>
</reference>
<reference key="6">
    <citation type="journal article" date="1998" name="J. Biol. Chem.">
        <title>The Bloom's syndrome helicase unwinds G4 DNA.</title>
        <authorList>
            <person name="Sun H."/>
            <person name="Karow J.K."/>
            <person name="Hickson I.D."/>
            <person name="Maizels N."/>
        </authorList>
    </citation>
    <scope>FUNCTION</scope>
    <scope>CATALYTIC ACTIVITY</scope>
</reference>
<reference key="7">
    <citation type="journal article" date="2000" name="Genes Dev.">
        <title>BASC, a super complex of BRCA1-associated proteins involved in the recognition and repair of aberrant DNA structures.</title>
        <authorList>
            <person name="Wang Y."/>
            <person name="Cortez D."/>
            <person name="Yazdi P."/>
            <person name="Neff N."/>
            <person name="Elledge S.J."/>
            <person name="Qin J."/>
        </authorList>
    </citation>
    <scope>IDENTIFICATION OF BLM AS MEMBER OF BASC</scope>
</reference>
<reference key="8">
    <citation type="journal article" date="2004" name="EMBO J.">
        <title>BLM and the FANC proteins collaborate in a common pathway in response to stalled replication forks.</title>
        <authorList>
            <person name="Pichierri P."/>
            <person name="Franchitto A."/>
            <person name="Rosselli F."/>
        </authorList>
    </citation>
    <scope>INTERACTION WITH FANCD2</scope>
    <scope>PHOSPHORYLATION</scope>
</reference>
<reference key="9">
    <citation type="journal article" date="2002" name="Cancer Res.">
        <title>The BLM helicase is necessary for normal DNA double-strand break repair.</title>
        <authorList>
            <person name="Langland G."/>
            <person name="Elliott J."/>
            <person name="Li Y."/>
            <person name="Creaney J."/>
            <person name="Dixon K."/>
            <person name="Groden J."/>
        </authorList>
    </citation>
    <scope>FUNCTION IN DNA REPAIR</scope>
</reference>
<reference key="10">
    <citation type="journal article" date="2005" name="EMBO J.">
        <title>BLAP75, an essential component of Bloom's syndrome protein complexes that maintain genome integrity.</title>
        <authorList>
            <person name="Yin J."/>
            <person name="Sobeck A."/>
            <person name="Xu C."/>
            <person name="Meetei A.R."/>
            <person name="Hoatlin M."/>
            <person name="Li L."/>
            <person name="Wang W."/>
        </authorList>
    </citation>
    <scope>IDENTIFICATION IN A COMPLEX WITH RMI1</scope>
    <scope>PHOSPHORYLATION</scope>
</reference>
<reference key="11">
    <citation type="journal article" date="2006" name="J. Biol. Chem.">
        <title>A double Holliday junction dissolvasome comprising BLM, topoisomerase III alpha, and BLAP75.</title>
        <authorList>
            <person name="Raynard S."/>
            <person name="Bussen W."/>
            <person name="Sung P."/>
        </authorList>
    </citation>
    <scope>INTERACTION WITH RMI1</scope>
</reference>
<reference key="12">
    <citation type="journal article" date="2006" name="Nat. Biotechnol.">
        <title>A probability-based approach for high-throughput protein phosphorylation analysis and site localization.</title>
        <authorList>
            <person name="Beausoleil S.A."/>
            <person name="Villen J."/>
            <person name="Gerber S.A."/>
            <person name="Rush J."/>
            <person name="Gygi S.P."/>
        </authorList>
    </citation>
    <scope>PHOSPHORYLATION [LARGE SCALE ANALYSIS] AT SER-499 AND THR-508</scope>
    <scope>IDENTIFICATION BY MASS SPECTROMETRY [LARGE SCALE ANALYSIS]</scope>
    <source>
        <tissue>Cervix carcinoma</tissue>
    </source>
</reference>
<reference key="13">
    <citation type="journal article" date="2007" name="Mech. Ageing Dev.">
        <title>Interaction of human SUV3 RNA/DNA helicase with BLM helicase; loss of the SUV3 gene results in mouse embryonic lethality.</title>
        <authorList>
            <person name="Pereira M."/>
            <person name="Mason P."/>
            <person name="Szczesny R.J."/>
            <person name="Maddukuri L."/>
            <person name="Dziwura S."/>
            <person name="Jedrzejczak R."/>
            <person name="Paul E."/>
            <person name="Wojcik A."/>
            <person name="Dybczynska L."/>
            <person name="Tudek B."/>
            <person name="Bartnik E."/>
            <person name="Klysik J."/>
            <person name="Bohr V.A."/>
            <person name="Stepien P.P."/>
        </authorList>
    </citation>
    <scope>INTERACTION WITH SUPV3L1</scope>
</reference>
<reference key="14">
    <citation type="journal article" date="2008" name="Genes Dev.">
        <title>RMI, a new OB-fold complex essential for Bloom syndrome protein to maintain genome stability.</title>
        <authorList>
            <person name="Xu D."/>
            <person name="Guo R."/>
            <person name="Sobeck A."/>
            <person name="Bachrati C.Z."/>
            <person name="Yang J."/>
            <person name="Enomoto T."/>
            <person name="Brown G.W."/>
            <person name="Hoatlin M.E."/>
            <person name="Hickson I.D."/>
            <person name="Wang W."/>
        </authorList>
    </citation>
    <scope>INTERACTION WITH RMI1</scope>
</reference>
<reference key="15">
    <citation type="journal article" date="2008" name="Genes Dev.">
        <title>BLAP18/RMI2, a novel OB-fold-containing protein, is an essential component of the Bloom helicase-double Holliday junction dissolvasome.</title>
        <authorList>
            <person name="Singh T.R."/>
            <person name="Ali A.M."/>
            <person name="Busygina V."/>
            <person name="Raynard S."/>
            <person name="Fan Q."/>
            <person name="Du C.-H."/>
            <person name="Andreassen P.R."/>
            <person name="Sung P."/>
            <person name="Meetei A.R."/>
        </authorList>
    </citation>
    <scope>INTERACTION WITH RMI1</scope>
</reference>
<reference key="16">
    <citation type="journal article" date="2008" name="Mol. Cell. Biol.">
        <title>FANCJ helicase defective in Fanconia anemia and breast cancer unwinds G-quadruplex DNA to defend genomic stability.</title>
        <authorList>
            <person name="Wu Y."/>
            <person name="Shin-ya K."/>
            <person name="Brosh R.M. Jr."/>
        </authorList>
    </citation>
    <scope>FUNCTION</scope>
    <scope>ACTIVITY REGULATION</scope>
</reference>
<reference key="17">
    <citation type="journal article" date="2008" name="Proc. Natl. Acad. Sci. U.S.A.">
        <title>A quantitative atlas of mitotic phosphorylation.</title>
        <authorList>
            <person name="Dephoure N."/>
            <person name="Zhou C."/>
            <person name="Villen J."/>
            <person name="Beausoleil S.A."/>
            <person name="Bakalarski C.E."/>
            <person name="Elledge S.J."/>
            <person name="Gygi S.P."/>
        </authorList>
    </citation>
    <scope>PHOSPHORYLATION [LARGE SCALE ANALYSIS] AT SER-48; THR-57; THR-114; SER-358; SER-419; SER-422; SER-1295; SER-1296 AND SER-1310</scope>
    <scope>IDENTIFICATION BY MASS SPECTROMETRY [LARGE SCALE ANALYSIS]</scope>
    <source>
        <tissue>Cervix carcinoma</tissue>
    </source>
</reference>
<reference key="18">
    <citation type="journal article" date="2009" name="Sci. Signal.">
        <title>Quantitative phosphoproteomic analysis of T cell receptor signaling reveals system-wide modulation of protein-protein interactions.</title>
        <authorList>
            <person name="Mayya V."/>
            <person name="Lundgren D.H."/>
            <person name="Hwang S.-I."/>
            <person name="Rezaul K."/>
            <person name="Wu L."/>
            <person name="Eng J.K."/>
            <person name="Rodionov V."/>
            <person name="Han D.K."/>
        </authorList>
    </citation>
    <scope>PHOSPHORYLATION [LARGE SCALE ANALYSIS] AT SER-499</scope>
    <scope>IDENTIFICATION BY MASS SPECTROMETRY [LARGE SCALE ANALYSIS]</scope>
    <source>
        <tissue>Leukemic T-cell</tissue>
    </source>
</reference>
<reference key="19">
    <citation type="journal article" date="2009" name="Science">
        <title>Lysine acetylation targets protein complexes and co-regulates major cellular functions.</title>
        <authorList>
            <person name="Choudhary C."/>
            <person name="Kumar C."/>
            <person name="Gnad F."/>
            <person name="Nielsen M.L."/>
            <person name="Rehman M."/>
            <person name="Walther T.C."/>
            <person name="Olsen J.V."/>
            <person name="Mann M."/>
        </authorList>
    </citation>
    <scope>ACETYLATION [LARGE SCALE ANALYSIS] AT LYS-863</scope>
    <scope>IDENTIFICATION BY MASS SPECTROMETRY [LARGE SCALE ANALYSIS]</scope>
</reference>
<reference key="20">
    <citation type="journal article" date="2010" name="Sci. Signal.">
        <title>Quantitative phosphoproteomics reveals widespread full phosphorylation site occupancy during mitosis.</title>
        <authorList>
            <person name="Olsen J.V."/>
            <person name="Vermeulen M."/>
            <person name="Santamaria A."/>
            <person name="Kumar C."/>
            <person name="Miller M.L."/>
            <person name="Jensen L.J."/>
            <person name="Gnad F."/>
            <person name="Cox J."/>
            <person name="Jensen T.S."/>
            <person name="Nigg E.A."/>
            <person name="Brunak S."/>
            <person name="Mann M."/>
        </authorList>
    </citation>
    <scope>PHOSPHORYLATION [LARGE SCALE ANALYSIS] AT SER-28; SER-168; THR-171; SER-419; SER-422 AND SER-426</scope>
    <scope>IDENTIFICATION BY MASS SPECTROMETRY [LARGE SCALE ANALYSIS]</scope>
    <source>
        <tissue>Cervix carcinoma</tissue>
    </source>
</reference>
<reference key="21">
    <citation type="journal article" date="2011" name="BMC Syst. Biol.">
        <title>Initial characterization of the human central proteome.</title>
        <authorList>
            <person name="Burkard T.R."/>
            <person name="Planyavsky M."/>
            <person name="Kaupe I."/>
            <person name="Breitwieser F.P."/>
            <person name="Buerckstuemmer T."/>
            <person name="Bennett K.L."/>
            <person name="Superti-Furga G."/>
            <person name="Colinge J."/>
        </authorList>
    </citation>
    <scope>IDENTIFICATION BY MASS SPECTROMETRY [LARGE SCALE ANALYSIS]</scope>
</reference>
<reference key="22">
    <citation type="journal article" date="2011" name="Genes Dev.">
        <title>BLM-DNA2-RPA-MRN and EXO1-BLM-RPA-MRN constitute two DNA end resection machineries for human DNA break repair.</title>
        <authorList>
            <person name="Nimonkar A.V."/>
            <person name="Genschel J."/>
            <person name="Kinoshita E."/>
            <person name="Polaczek P."/>
            <person name="Campbell J.L."/>
            <person name="Wyman C."/>
            <person name="Modrich P."/>
            <person name="Kowalczykowski S.C."/>
        </authorList>
    </citation>
    <scope>FUNCTION</scope>
    <scope>INTERACTION WITH DNA2</scope>
</reference>
<reference key="23">
    <citation type="journal article" date="2013" name="J. Proteome Res.">
        <title>Toward a comprehensive characterization of a human cancer cell phosphoproteome.</title>
        <authorList>
            <person name="Zhou H."/>
            <person name="Di Palma S."/>
            <person name="Preisinger C."/>
            <person name="Peng M."/>
            <person name="Polat A.N."/>
            <person name="Heck A.J."/>
            <person name="Mohammed S."/>
        </authorList>
    </citation>
    <scope>PHOSPHORYLATION [LARGE SCALE ANALYSIS] AT SER-168; THR-171; SER-328; SER-338; SER-358; SER-422; SER-464; SER-499; SER-1197 AND SER-1310</scope>
    <scope>IDENTIFICATION BY MASS SPECTROMETRY [LARGE SCALE ANALYSIS]</scope>
    <source>
        <tissue>Cervix carcinoma</tissue>
        <tissue>Erythroleukemia</tissue>
    </source>
</reference>
<reference key="24">
    <citation type="journal article" date="2013" name="Proc. Natl. Acad. Sci. U.S.A.">
        <title>Scaffolding protein SPIDR/KIAA0146 connects the Bloom syndrome helicase with homologous recombination repair.</title>
        <authorList>
            <person name="Wan L."/>
            <person name="Han J."/>
            <person name="Liu T."/>
            <person name="Dong S."/>
            <person name="Xie F."/>
            <person name="Chen H."/>
            <person name="Huang J."/>
        </authorList>
    </citation>
    <scope>FUNCTION</scope>
    <scope>IDENTIFICATION IN A COMPLEX WITH SPIDR AND RAD51</scope>
    <scope>INTERACTION WITH RMI1; SPIDR AND TOP3A</scope>
    <scope>SUBCELLULAR LOCATION</scope>
</reference>
<reference key="25">
    <citation type="journal article" date="2015" name="Cell Rep.">
        <title>SUMO-2 orchestrates chromatin modifiers in response to DNA damage.</title>
        <authorList>
            <person name="Hendriks I.A."/>
            <person name="Treffers L.W."/>
            <person name="Verlaan-de Vries M."/>
            <person name="Olsen J.V."/>
            <person name="Vertegaal A.C."/>
        </authorList>
    </citation>
    <scope>SUMOYLATION [LARGE SCALE ANALYSIS] AT LYS-484</scope>
    <scope>IDENTIFICATION BY MASS SPECTROMETRY [LARGE SCALE ANALYSIS]</scope>
</reference>
<reference key="26">
    <citation type="journal article" date="2015" name="Mol. Cell. Proteomics">
        <title>System-wide analysis of SUMOylation dynamics in response to replication stress reveals novel small ubiquitin-like modified target proteins and acceptor lysines relevant for genome stability.</title>
        <authorList>
            <person name="Xiao Z."/>
            <person name="Chang J.G."/>
            <person name="Hendriks I.A."/>
            <person name="Sigurdsson J.O."/>
            <person name="Olsen J.V."/>
            <person name="Vertegaal A.C."/>
        </authorList>
    </citation>
    <scope>SUMOYLATION [LARGE SCALE ANALYSIS] AT LYS-331 AND LYS-594</scope>
    <scope>IDENTIFICATION BY MASS SPECTROMETRY [LARGE SCALE ANALYSIS]</scope>
</reference>
<reference key="27">
    <citation type="journal article" date="2017" name="Nat. Struct. Mol. Biol.">
        <title>Site-specific mapping of the human SUMO proteome reveals co-modification with phosphorylation.</title>
        <authorList>
            <person name="Hendriks I.A."/>
            <person name="Lyon D."/>
            <person name="Young C."/>
            <person name="Jensen L.J."/>
            <person name="Vertegaal A.C."/>
            <person name="Nielsen M.L."/>
        </authorList>
    </citation>
    <scope>SUMOYLATION [LARGE SCALE ANALYSIS] AT LYS-24; LYS-31; LYS-38; LYS-56; LYS-63; LYS-87; LYS-91; LYS-105; LYS-116; LYS-129; LYS-195; LYS-205; LYS-331; LYS-344; LYS-347; LYS-451; LYS-476; LYS-484; LYS-498; LYS-513; LYS-514; LYS-531; LYS-535; LYS-588; LYS-594; LYS-604; LYS-1125; LYS-1199; LYS-1207; LYS-1329; LYS-1372 AND LYS-1395</scope>
    <scope>IDENTIFICATION BY MASS SPECTROMETRY [LARGE SCALE ANALYSIS]</scope>
</reference>
<reference key="28">
    <citation type="journal article" date="2020" name="Nat. Microbiol.">
        <title>Vpu modulates DNA repair to suppress innate sensing and hyper-integration of HIV-1.</title>
        <authorList>
            <person name="Volcic M."/>
            <person name="Sparrer K.M.J."/>
            <person name="Koepke L."/>
            <person name="Hotter D."/>
            <person name="Sauter D."/>
            <person name="Stuerzel C.M."/>
            <person name="Scherer M."/>
            <person name="Stamminger T."/>
            <person name="Hofmann T.G."/>
            <person name="Arhel N.J."/>
            <person name="Wiesmueller L."/>
            <person name="Kirchhoff F."/>
        </authorList>
    </citation>
    <scope>DECREASE IN SUMYOYLATION (MICROBIAL INFECTION)</scope>
    <scope>FUNCTION (MICROBIAL INFECTION)</scope>
</reference>
<reference key="29">
    <citation type="journal article" date="2021" name="Nucleic Acids Res.">
        <title>USP37 regulates DNA damage response through stabilizing and deubiquitinating BLM.</title>
        <authorList>
            <person name="Wu C."/>
            <person name="Chang Y."/>
            <person name="Chen J."/>
            <person name="Su Y."/>
            <person name="Li L."/>
            <person name="Chen Y."/>
            <person name="Li Y."/>
            <person name="Wu J."/>
            <person name="Huang J."/>
            <person name="Zhao F."/>
            <person name="Wang W."/>
            <person name="Yin H."/>
            <person name="Wang S."/>
            <person name="Jin M."/>
            <person name="Lou Z."/>
            <person name="Zhu W.G."/>
            <person name="Luo K."/>
            <person name="Zhang J."/>
            <person name="Yuan J."/>
        </authorList>
    </citation>
    <scope>FUNCTION</scope>
    <scope>DEUBIQUITINATION BY USP37</scope>
</reference>
<reference key="30">
    <citation type="journal article" date="2010" name="Nucleic Acids Res.">
        <title>Structure and function of the regulatory HRDC domain from human Bloom syndrome protein.</title>
        <authorList>
            <person name="Kim Y.M."/>
            <person name="Choi B.S."/>
        </authorList>
    </citation>
    <scope>STRUCTURE BY NMR OF 1210-1294</scope>
    <scope>MUTAGENESIS OF LYS-1227; TYR-1237; ASN-1239; THR-1243 AND VAL-1244</scope>
    <scope>DNA-BINDING</scope>
    <scope>DOMAIN</scope>
    <scope>REGION</scope>
</reference>
<reference key="31">
    <citation type="journal article" date="2013" name="Sci. Rep.">
        <title>Structure of the RecQ C-terminal domain of human Bloom syndrome protein.</title>
        <authorList>
            <person name="Kim S.Y."/>
            <person name="Hakoshima T."/>
            <person name="Kitano K."/>
        </authorList>
    </citation>
    <scope>X-RAY CRYSTALLOGRAPHY (2.70 ANGSTROMS) OF 1068-1209</scope>
    <scope>MUTAGENESIS OF 1094-SER--VAL-1103; SER-1121; LYS-1125 AND ARG-1139</scope>
    <scope>DNA-BINDING</scope>
    <scope>REGION</scope>
</reference>
<reference key="32">
    <citation type="journal article" date="2014" name="Acta Crystallogr. D">
        <title>Structure of human Bloom's syndrome helicase in complex with ADP and duplex DNA.</title>
        <authorList>
            <person name="Swan M.K."/>
            <person name="Legris V."/>
            <person name="Tanner A."/>
            <person name="Reaper P.M."/>
            <person name="Vial S."/>
            <person name="Bordas R."/>
            <person name="Pollard J.R."/>
            <person name="Charlton P.A."/>
            <person name="Golec J.M."/>
            <person name="Bertrand J.A."/>
        </authorList>
    </citation>
    <scope>X-RAY CRYSTALLOGRAPHY (2.30 ANGSTROMS) OF 640-1298 IN COMPLEX WITH DNA; ADP AND ZINC IONS</scope>
    <scope>FUNCTION</scope>
    <scope>DNA-BINDING</scope>
    <scope>CATALYTIC ACTIVITY</scope>
    <scope>COFACTOR</scope>
    <scope>ZINC-BINDING MOTIF</scope>
    <scope>DNA-BINDING DOMAIN</scope>
    <scope>MUTAGENESIS OF ASN-1164</scope>
</reference>
<reference key="33">
    <citation type="journal article" date="2014" name="J. Biomol. NMR">
        <title>Solution structure of the RecQ C-terminal domain of human Bloom syndrome protein.</title>
        <authorList>
            <person name="Park C.J."/>
            <person name="Ko J."/>
            <person name="Ryu K.S."/>
            <person name="Choi B.S."/>
        </authorList>
    </citation>
    <scope>STRUCTURE BY NMR OF 1067-1210</scope>
</reference>
<reference key="34">
    <citation type="journal article" date="2015" name="Nucleic Acids Res.">
        <title>Crystal structure of the Bloom's syndrome helicase indicates a role for the HRDC domain in conformational changes.</title>
        <authorList>
            <person name="Newman J.A."/>
            <person name="Savitsky P."/>
            <person name="Allerston C.K."/>
            <person name="Bizard A.H."/>
            <person name="Ozer O."/>
            <person name="Sarlos K."/>
            <person name="Liu Y."/>
            <person name="Pardon E."/>
            <person name="Steyaert J."/>
            <person name="Hickson I.D."/>
            <person name="Gileadi O."/>
        </authorList>
    </citation>
    <scope>X-RAY CRYSTALLOGRAPHY (2.79 ANGSTROMS) OF 636-1298 IN COMPLEX WITH DNA; ADP AND ZINC IONS</scope>
    <scope>FUNCTION</scope>
    <scope>DNA-BINDING</scope>
    <scope>CATALYTIC ACTIVITY</scope>
    <scope>COFACTOR</scope>
    <scope>DOMAIN</scope>
    <scope>MUTAGENESIS OF HIS-666; SER-729 AND LYS-1270</scope>
</reference>
<reference key="35">
    <citation type="journal article" date="2017" name="J. Biol. Chem.">
        <title>A helical bundle in the N-terminal domain of the BLM helicase mediates dimer and potentially hexamer formation.</title>
        <authorList>
            <person name="Shi J."/>
            <person name="Chen W.F."/>
            <person name="Zhang B."/>
            <person name="Fan S.H."/>
            <person name="Ai X."/>
            <person name="Liu N.N."/>
            <person name="Rety S."/>
            <person name="Xi X.G."/>
        </authorList>
    </citation>
    <scope>X-RAY CRYSTALLOGRAPHY (2.03 ANGSTROMS) OF 362-414 OF HOMODIMER</scope>
    <scope>SUBUNIT</scope>
    <scope>HOMOOLIGOMERIZATION</scope>
    <scope>DOMAIN</scope>
    <scope>REGION</scope>
</reference>
<reference key="36">
    <citation type="journal article" date="1997" name="Hum. Mol. Genet.">
        <title>Characterization of a new BLM mutation associated with a topoisomerase II alpha defect in a patient with Bloom's syndrome.</title>
        <authorList>
            <person name="Foucault F."/>
            <person name="Vaury C."/>
            <person name="Barakat A."/>
            <person name="Thibout D."/>
            <person name="Planchon P."/>
            <person name="Jaulin C."/>
            <person name="Praz F."/>
            <person name="Amor-Gueret M."/>
        </authorList>
    </citation>
    <scope>VARIANT BLM PHE-1036</scope>
</reference>
<reference key="37">
    <citation type="journal article" date="2000" name="Hum. Mutat.">
        <title>Identification of a novel BLM missense mutation (2706T&gt;C) in a Moroccan patient with Bloom's syndrome.</title>
        <authorList>
            <person name="Barakat A."/>
            <person name="Ababou M."/>
            <person name="Onclercq R."/>
            <person name="Dutertre S."/>
            <person name="Chadli E."/>
            <person name="Hda N."/>
            <person name="Benslimane A."/>
            <person name="Amor-Gueret M."/>
        </authorList>
    </citation>
    <scope>VARIANT BLM ARG-878</scope>
</reference>
<reference key="38">
    <citation type="journal article" date="2007" name="Hum. Mutat.">
        <title>Syndrome-causing mutations of the BLM gene in persons in the Bloom's Syndrome Registry.</title>
        <authorList>
            <person name="German J."/>
            <person name="Sanz M.M."/>
            <person name="Ciocci S."/>
            <person name="Ye T.Z."/>
            <person name="Ellis N.A."/>
        </authorList>
    </citation>
    <scope>VARIANTS BLM GLU-891 AND TYR-901</scope>
</reference>
<proteinExistence type="evidence at protein level"/>
<keyword id="KW-0002">3D-structure</keyword>
<keyword id="KW-0007">Acetylation</keyword>
<keyword id="KW-0067">ATP-binding</keyword>
<keyword id="KW-0225">Disease variant</keyword>
<keyword id="KW-0227">DNA damage</keyword>
<keyword id="KW-0234">DNA repair</keyword>
<keyword id="KW-0235">DNA replication</keyword>
<keyword id="KW-0238">DNA-binding</keyword>
<keyword id="KW-0242">Dwarfism</keyword>
<keyword id="KW-0347">Helicase</keyword>
<keyword id="KW-0378">Hydrolase</keyword>
<keyword id="KW-0413">Isomerase</keyword>
<keyword id="KW-1017">Isopeptide bond</keyword>
<keyword id="KW-0479">Metal-binding</keyword>
<keyword id="KW-0547">Nucleotide-binding</keyword>
<keyword id="KW-0539">Nucleus</keyword>
<keyword id="KW-0597">Phosphoprotein</keyword>
<keyword id="KW-1267">Proteomics identification</keyword>
<keyword id="KW-1185">Reference proteome</keyword>
<keyword id="KW-0832">Ubl conjugation</keyword>
<keyword id="KW-0862">Zinc</keyword>